<feature type="initiator methionine" description="Removed" evidence="2 9">
    <location>
        <position position="1"/>
    </location>
</feature>
<feature type="chain" id="PRO_0000153524" description="Small ribosomal subunit protein eS1">
    <location>
        <begin position="2"/>
        <end position="264"/>
    </location>
</feature>
<feature type="region of interest" description="Disordered" evidence="3">
    <location>
        <begin position="232"/>
        <end position="264"/>
    </location>
</feature>
<feature type="compositionally biased region" description="Basic and acidic residues" evidence="3">
    <location>
        <begin position="242"/>
        <end position="255"/>
    </location>
</feature>
<feature type="modified residue" description="N6-acetyllysine; alternate" evidence="19">
    <location>
        <position position="34"/>
    </location>
</feature>
<feature type="modified residue" description="N6-acetyllysine" evidence="1">
    <location>
        <position position="56"/>
    </location>
</feature>
<feature type="modified residue" description="ADP-ribosyltyrosine" evidence="7">
    <location>
        <position position="155"/>
    </location>
</feature>
<feature type="modified residue" description="Phosphoserine" evidence="22">
    <location>
        <position position="236"/>
    </location>
</feature>
<feature type="modified residue" description="Phosphoserine" evidence="1">
    <location>
        <position position="237"/>
    </location>
</feature>
<feature type="modified residue" description="N6-acetyllysine; alternate" evidence="19">
    <location>
        <position position="249"/>
    </location>
</feature>
<feature type="modified residue" description="Phosphotyrosine" evidence="14">
    <location>
        <position position="256"/>
    </location>
</feature>
<feature type="modified residue" description="Phosphoserine" evidence="15 16 17 18 20 21 23">
    <location>
        <position position="263"/>
    </location>
</feature>
<feature type="cross-link" description="Glycyl lysine isopeptide (Lys-Gly) (interchain with G-Cter in SUMO2); alternate" evidence="25">
    <location>
        <position position="34"/>
    </location>
</feature>
<feature type="cross-link" description="Glycyl lysine isopeptide (Lys-Gly) (interchain with G-Cter in SUMO2); alternate" evidence="24 25">
    <location>
        <position position="249"/>
    </location>
</feature>
<feature type="mutagenesis site" description="Decreased ADP-ribosylation." evidence="7">
    <original>Y</original>
    <variation>F</variation>
    <location>
        <position position="155"/>
    </location>
</feature>
<feature type="helix" evidence="27">
    <location>
        <begin position="24"/>
        <end position="27"/>
    </location>
</feature>
<feature type="strand" evidence="27">
    <location>
        <begin position="28"/>
        <end position="34"/>
    </location>
</feature>
<feature type="strand" evidence="28">
    <location>
        <begin position="39"/>
        <end position="41"/>
    </location>
</feature>
<feature type="strand" evidence="27">
    <location>
        <begin position="43"/>
        <end position="50"/>
    </location>
</feature>
<feature type="strand" evidence="27">
    <location>
        <begin position="54"/>
        <end position="56"/>
    </location>
</feature>
<feature type="helix" evidence="27">
    <location>
        <begin position="58"/>
        <end position="62"/>
    </location>
</feature>
<feature type="strand" evidence="27">
    <location>
        <begin position="66"/>
        <end position="70"/>
    </location>
</feature>
<feature type="helix" evidence="27">
    <location>
        <begin position="71"/>
        <end position="73"/>
    </location>
</feature>
<feature type="strand" evidence="27">
    <location>
        <begin position="75"/>
        <end position="78"/>
    </location>
</feature>
<feature type="strand" evidence="27">
    <location>
        <begin position="82"/>
        <end position="92"/>
    </location>
</feature>
<feature type="strand" evidence="27">
    <location>
        <begin position="95"/>
        <end position="105"/>
    </location>
</feature>
<feature type="helix" evidence="27">
    <location>
        <begin position="107"/>
        <end position="113"/>
    </location>
</feature>
<feature type="strand" evidence="26">
    <location>
        <begin position="116"/>
        <end position="118"/>
    </location>
</feature>
<feature type="strand" evidence="27">
    <location>
        <begin position="120"/>
        <end position="128"/>
    </location>
</feature>
<feature type="strand" evidence="26">
    <location>
        <begin position="130"/>
        <end position="132"/>
    </location>
</feature>
<feature type="strand" evidence="27">
    <location>
        <begin position="134"/>
        <end position="143"/>
    </location>
</feature>
<feature type="helix" evidence="27">
    <location>
        <begin position="158"/>
        <end position="177"/>
    </location>
</feature>
<feature type="helix" evidence="27">
    <location>
        <begin position="181"/>
        <end position="188"/>
    </location>
</feature>
<feature type="turn" evidence="27">
    <location>
        <begin position="189"/>
        <end position="191"/>
    </location>
</feature>
<feature type="helix" evidence="27">
    <location>
        <begin position="192"/>
        <end position="201"/>
    </location>
</feature>
<feature type="turn" evidence="27">
    <location>
        <begin position="202"/>
        <end position="204"/>
    </location>
</feature>
<feature type="strand" evidence="27">
    <location>
        <begin position="207"/>
        <end position="219"/>
    </location>
</feature>
<feature type="helix" evidence="27">
    <location>
        <begin position="225"/>
        <end position="230"/>
    </location>
</feature>
<accession>P61247</accession>
<accession>B2R4D4</accession>
<accession>D3DP05</accession>
<accession>P33443</accession>
<accession>P49241</accession>
<evidence type="ECO:0000250" key="1">
    <source>
        <dbReference type="UniProtKB" id="P97351"/>
    </source>
</evidence>
<evidence type="ECO:0000255" key="2">
    <source>
        <dbReference type="HAMAP-Rule" id="MF_03122"/>
    </source>
</evidence>
<evidence type="ECO:0000256" key="3">
    <source>
        <dbReference type="SAM" id="MobiDB-lite"/>
    </source>
</evidence>
<evidence type="ECO:0000269" key="4">
    <source>
    </source>
</evidence>
<evidence type="ECO:0000269" key="5">
    <source>
    </source>
</evidence>
<evidence type="ECO:0000269" key="6">
    <source>
    </source>
</evidence>
<evidence type="ECO:0000269" key="7">
    <source>
    </source>
</evidence>
<evidence type="ECO:0000269" key="8">
    <source>
    </source>
</evidence>
<evidence type="ECO:0000269" key="9">
    <source>
    </source>
</evidence>
<evidence type="ECO:0000303" key="10">
    <source>
    </source>
</evidence>
<evidence type="ECO:0007744" key="11">
    <source>
        <dbReference type="PDB" id="7MQ8"/>
    </source>
</evidence>
<evidence type="ECO:0007744" key="12">
    <source>
        <dbReference type="PDB" id="7MQ9"/>
    </source>
</evidence>
<evidence type="ECO:0007744" key="13">
    <source>
        <dbReference type="PDB" id="7MQA"/>
    </source>
</evidence>
<evidence type="ECO:0007744" key="14">
    <source>
    </source>
</evidence>
<evidence type="ECO:0007744" key="15">
    <source>
    </source>
</evidence>
<evidence type="ECO:0007744" key="16">
    <source>
    </source>
</evidence>
<evidence type="ECO:0007744" key="17">
    <source>
    </source>
</evidence>
<evidence type="ECO:0007744" key="18">
    <source>
    </source>
</evidence>
<evidence type="ECO:0007744" key="19">
    <source>
    </source>
</evidence>
<evidence type="ECO:0007744" key="20">
    <source>
    </source>
</evidence>
<evidence type="ECO:0007744" key="21">
    <source>
    </source>
</evidence>
<evidence type="ECO:0007744" key="22">
    <source>
    </source>
</evidence>
<evidence type="ECO:0007744" key="23">
    <source>
    </source>
</evidence>
<evidence type="ECO:0007744" key="24">
    <source>
    </source>
</evidence>
<evidence type="ECO:0007744" key="25">
    <source>
    </source>
</evidence>
<evidence type="ECO:0007829" key="26">
    <source>
        <dbReference type="PDB" id="6ZV6"/>
    </source>
</evidence>
<evidence type="ECO:0007829" key="27">
    <source>
        <dbReference type="PDB" id="7R4X"/>
    </source>
</evidence>
<evidence type="ECO:0007829" key="28">
    <source>
        <dbReference type="PDB" id="8RG0"/>
    </source>
</evidence>
<comment type="function">
    <text evidence="2 6 8">Component of the small ribosomal subunit. The ribosome is a large ribonucleoprotein complex responsible for the synthesis of proteins in the cell (PubMed:23636399). Part of the small subunit (SSU) processome, first precursor of the small eukaryotic ribosomal subunit. During the assembly of the SSU processome in the nucleolus, many ribosome biogenesis factors, an RNA chaperone and ribosomal proteins associate with the nascent pre-rRNA and work in concert to generate RNA folding, modifications, rearrangements and cleavage as well as targeted degradation of pre-ribosomal RNA by the RNA exosome (PubMed:34516797). May play a role during erythropoiesis through regulation of transcription factor DDIT3 (By similarity).</text>
</comment>
<comment type="subunit">
    <text evidence="2 4 5 6 8">Component of the small ribosomal subunit (PubMed:23636399). Mature ribosomes consist of a small (40S) and a large (60S) subunit (PubMed:23636399). The 40S subunit contains about 33 different proteins and 1 molecule of RNA (18S). The 60S subunit contains about 49 different proteins and 3 molecules of RNA (28S, 5.8S and 5S) (PubMed:23636399). Identified in a IGF2BP1-dependent mRNP granule complex containing untranslated mRNAs (PubMed:17289661). Binds with high affinity to IPO4 (PubMed:11823430). Interacts with DDIT3. Part of the small subunit (SSU) processome, composed of more than 70 proteins and the RNA chaperone small nucleolar RNA (snoRNA) U3 (PubMed:34516797).</text>
</comment>
<comment type="interaction">
    <interactant intactId="EBI-352378">
        <id>P61247</id>
    </interactant>
    <interactant intactId="EBI-296047">
        <id>P07900</id>
        <label>HSP90AA1</label>
    </interactant>
    <organismsDiffer>false</organismsDiffer>
    <experiments>3</experiments>
</comment>
<comment type="interaction">
    <interactant intactId="EBI-352378">
        <id>P61247</id>
    </interactant>
    <interactant intactId="EBI-356860">
        <id>P62906</id>
        <label>RPL10A</label>
    </interactant>
    <organismsDiffer>false</organismsDiffer>
    <experiments>2</experiments>
</comment>
<comment type="interaction">
    <interactant intactId="EBI-352378">
        <id>P61247</id>
    </interactant>
    <interactant intactId="EBI-352783">
        <id>P62263</id>
        <label>RPS14</label>
    </interactant>
    <organismsDiffer>false</organismsDiffer>
    <experiments>4</experiments>
</comment>
<comment type="subcellular location">
    <subcellularLocation>
        <location evidence="2 5 6">Cytoplasm</location>
    </subcellularLocation>
    <subcellularLocation>
        <location evidence="2">Nucleus</location>
    </subcellularLocation>
    <subcellularLocation>
        <location evidence="8">Nucleus</location>
        <location evidence="8">Nucleolus</location>
    </subcellularLocation>
    <text>Localized in cytoplasmic mRNP granules containing untranslated mRNAs.</text>
</comment>
<comment type="PTM">
    <text evidence="7">ADP-ribosylated at Tyr-155 by PARP1 in presence of HPF1.</text>
</comment>
<comment type="similarity">
    <text evidence="2">Belongs to the eukaryotic ribosomal protein eS1 family.</text>
</comment>
<reference key="1">
    <citation type="journal article" date="1992" name="Gene">
        <title>Human ribosomal protein S3a: cloning of the cDNA and primary structure of the protein.</title>
        <authorList>
            <person name="Metspalu A."/>
            <person name="Rebane A."/>
            <person name="Hoth S."/>
            <person name="Pooga M."/>
            <person name="Stahl J."/>
            <person name="Kruppa J."/>
        </authorList>
    </citation>
    <scope>NUCLEOTIDE SEQUENCE [MRNA]</scope>
</reference>
<reference key="2">
    <citation type="journal article" date="1992" name="Proc. Natl. Acad. Sci. U.S.A.">
        <title>Fte-1, a v-fos transformation effector gene, encodes the mammalian homologue of a yeast gene involved in protein import into mitochondria.</title>
        <authorList>
            <person name="Kho C.J."/>
            <person name="Zarbl H."/>
        </authorList>
    </citation>
    <scope>NUCLEOTIDE SEQUENCE [MRNA]</scope>
</reference>
<reference key="3">
    <citation type="submission" date="1993-06" db="EMBL/GenBank/DDBJ databases">
        <authorList>
            <person name="Bonaldo M."/>
            <person name="Soares M.B."/>
        </authorList>
    </citation>
    <scope>NUCLEOTIDE SEQUENCE [MRNA]</scope>
    <source>
        <tissue>Liver</tissue>
    </source>
</reference>
<reference key="4">
    <citation type="journal article" date="1996" name="Gene">
        <title>The human S3a ribosomal protein: sequence, location and cell-free transcription of the functional gene.</title>
        <authorList>
            <person name="Nolte D."/>
            <person name="Taimor G."/>
            <person name="Kalff-Suske M."/>
            <person name="Seifart K.H."/>
        </authorList>
    </citation>
    <scope>NUCLEOTIDE SEQUENCE [GENOMIC DNA]</scope>
</reference>
<reference key="5">
    <citation type="journal article" date="2005" name="Nature">
        <title>Generation and annotation of the DNA sequences of human chromosomes 2 and 4.</title>
        <authorList>
            <person name="Hillier L.W."/>
            <person name="Graves T.A."/>
            <person name="Fulton R.S."/>
            <person name="Fulton L.A."/>
            <person name="Pepin K.H."/>
            <person name="Minx P."/>
            <person name="Wagner-McPherson C."/>
            <person name="Layman D."/>
            <person name="Wylie K."/>
            <person name="Sekhon M."/>
            <person name="Becker M.C."/>
            <person name="Fewell G.A."/>
            <person name="Delehaunty K.D."/>
            <person name="Miner T.L."/>
            <person name="Nash W.E."/>
            <person name="Kremitzki C."/>
            <person name="Oddy L."/>
            <person name="Du H."/>
            <person name="Sun H."/>
            <person name="Bradshaw-Cordum H."/>
            <person name="Ali J."/>
            <person name="Carter J."/>
            <person name="Cordes M."/>
            <person name="Harris A."/>
            <person name="Isak A."/>
            <person name="van Brunt A."/>
            <person name="Nguyen C."/>
            <person name="Du F."/>
            <person name="Courtney L."/>
            <person name="Kalicki J."/>
            <person name="Ozersky P."/>
            <person name="Abbott S."/>
            <person name="Armstrong J."/>
            <person name="Belter E.A."/>
            <person name="Caruso L."/>
            <person name="Cedroni M."/>
            <person name="Cotton M."/>
            <person name="Davidson T."/>
            <person name="Desai A."/>
            <person name="Elliott G."/>
            <person name="Erb T."/>
            <person name="Fronick C."/>
            <person name="Gaige T."/>
            <person name="Haakenson W."/>
            <person name="Haglund K."/>
            <person name="Holmes A."/>
            <person name="Harkins R."/>
            <person name="Kim K."/>
            <person name="Kruchowski S.S."/>
            <person name="Strong C.M."/>
            <person name="Grewal N."/>
            <person name="Goyea E."/>
            <person name="Hou S."/>
            <person name="Levy A."/>
            <person name="Martinka S."/>
            <person name="Mead K."/>
            <person name="McLellan M.D."/>
            <person name="Meyer R."/>
            <person name="Randall-Maher J."/>
            <person name="Tomlinson C."/>
            <person name="Dauphin-Kohlberg S."/>
            <person name="Kozlowicz-Reilly A."/>
            <person name="Shah N."/>
            <person name="Swearengen-Shahid S."/>
            <person name="Snider J."/>
            <person name="Strong J.T."/>
            <person name="Thompson J."/>
            <person name="Yoakum M."/>
            <person name="Leonard S."/>
            <person name="Pearman C."/>
            <person name="Trani L."/>
            <person name="Radionenko M."/>
            <person name="Waligorski J.E."/>
            <person name="Wang C."/>
            <person name="Rock S.M."/>
            <person name="Tin-Wollam A.-M."/>
            <person name="Maupin R."/>
            <person name="Latreille P."/>
            <person name="Wendl M.C."/>
            <person name="Yang S.-P."/>
            <person name="Pohl C."/>
            <person name="Wallis J.W."/>
            <person name="Spieth J."/>
            <person name="Bieri T.A."/>
            <person name="Berkowicz N."/>
            <person name="Nelson J.O."/>
            <person name="Osborne J."/>
            <person name="Ding L."/>
            <person name="Meyer R."/>
            <person name="Sabo A."/>
            <person name="Shotland Y."/>
            <person name="Sinha P."/>
            <person name="Wohldmann P.E."/>
            <person name="Cook L.L."/>
            <person name="Hickenbotham M.T."/>
            <person name="Eldred J."/>
            <person name="Williams D."/>
            <person name="Jones T.A."/>
            <person name="She X."/>
            <person name="Ciccarelli F.D."/>
            <person name="Izaurralde E."/>
            <person name="Taylor J."/>
            <person name="Schmutz J."/>
            <person name="Myers R.M."/>
            <person name="Cox D.R."/>
            <person name="Huang X."/>
            <person name="McPherson J.D."/>
            <person name="Mardis E.R."/>
            <person name="Clifton S.W."/>
            <person name="Warren W.C."/>
            <person name="Chinwalla A.T."/>
            <person name="Eddy S.R."/>
            <person name="Marra M.A."/>
            <person name="Ovcharenko I."/>
            <person name="Furey T.S."/>
            <person name="Miller W."/>
            <person name="Eichler E.E."/>
            <person name="Bork P."/>
            <person name="Suyama M."/>
            <person name="Torrents D."/>
            <person name="Waterston R.H."/>
            <person name="Wilson R.K."/>
        </authorList>
    </citation>
    <scope>NUCLEOTIDE SEQUENCE [LARGE SCALE GENOMIC DNA]</scope>
</reference>
<reference key="6">
    <citation type="journal article" date="2004" name="Nat. Genet.">
        <title>Complete sequencing and characterization of 21,243 full-length human cDNAs.</title>
        <authorList>
            <person name="Ota T."/>
            <person name="Suzuki Y."/>
            <person name="Nishikawa T."/>
            <person name="Otsuki T."/>
            <person name="Sugiyama T."/>
            <person name="Irie R."/>
            <person name="Wakamatsu A."/>
            <person name="Hayashi K."/>
            <person name="Sato H."/>
            <person name="Nagai K."/>
            <person name="Kimura K."/>
            <person name="Makita H."/>
            <person name="Sekine M."/>
            <person name="Obayashi M."/>
            <person name="Nishi T."/>
            <person name="Shibahara T."/>
            <person name="Tanaka T."/>
            <person name="Ishii S."/>
            <person name="Yamamoto J."/>
            <person name="Saito K."/>
            <person name="Kawai Y."/>
            <person name="Isono Y."/>
            <person name="Nakamura Y."/>
            <person name="Nagahari K."/>
            <person name="Murakami K."/>
            <person name="Yasuda T."/>
            <person name="Iwayanagi T."/>
            <person name="Wagatsuma M."/>
            <person name="Shiratori A."/>
            <person name="Sudo H."/>
            <person name="Hosoiri T."/>
            <person name="Kaku Y."/>
            <person name="Kodaira H."/>
            <person name="Kondo H."/>
            <person name="Sugawara M."/>
            <person name="Takahashi M."/>
            <person name="Kanda K."/>
            <person name="Yokoi T."/>
            <person name="Furuya T."/>
            <person name="Kikkawa E."/>
            <person name="Omura Y."/>
            <person name="Abe K."/>
            <person name="Kamihara K."/>
            <person name="Katsuta N."/>
            <person name="Sato K."/>
            <person name="Tanikawa M."/>
            <person name="Yamazaki M."/>
            <person name="Ninomiya K."/>
            <person name="Ishibashi T."/>
            <person name="Yamashita H."/>
            <person name="Murakawa K."/>
            <person name="Fujimori K."/>
            <person name="Tanai H."/>
            <person name="Kimata M."/>
            <person name="Watanabe M."/>
            <person name="Hiraoka S."/>
            <person name="Chiba Y."/>
            <person name="Ishida S."/>
            <person name="Ono Y."/>
            <person name="Takiguchi S."/>
            <person name="Watanabe S."/>
            <person name="Yosida M."/>
            <person name="Hotuta T."/>
            <person name="Kusano J."/>
            <person name="Kanehori K."/>
            <person name="Takahashi-Fujii A."/>
            <person name="Hara H."/>
            <person name="Tanase T.-O."/>
            <person name="Nomura Y."/>
            <person name="Togiya S."/>
            <person name="Komai F."/>
            <person name="Hara R."/>
            <person name="Takeuchi K."/>
            <person name="Arita M."/>
            <person name="Imose N."/>
            <person name="Musashino K."/>
            <person name="Yuuki H."/>
            <person name="Oshima A."/>
            <person name="Sasaki N."/>
            <person name="Aotsuka S."/>
            <person name="Yoshikawa Y."/>
            <person name="Matsunawa H."/>
            <person name="Ichihara T."/>
            <person name="Shiohata N."/>
            <person name="Sano S."/>
            <person name="Moriya S."/>
            <person name="Momiyama H."/>
            <person name="Satoh N."/>
            <person name="Takami S."/>
            <person name="Terashima Y."/>
            <person name="Suzuki O."/>
            <person name="Nakagawa S."/>
            <person name="Senoh A."/>
            <person name="Mizoguchi H."/>
            <person name="Goto Y."/>
            <person name="Shimizu F."/>
            <person name="Wakebe H."/>
            <person name="Hishigaki H."/>
            <person name="Watanabe T."/>
            <person name="Sugiyama A."/>
            <person name="Takemoto M."/>
            <person name="Kawakami B."/>
            <person name="Yamazaki M."/>
            <person name="Watanabe K."/>
            <person name="Kumagai A."/>
            <person name="Itakura S."/>
            <person name="Fukuzumi Y."/>
            <person name="Fujimori Y."/>
            <person name="Komiyama M."/>
            <person name="Tashiro H."/>
            <person name="Tanigami A."/>
            <person name="Fujiwara T."/>
            <person name="Ono T."/>
            <person name="Yamada K."/>
            <person name="Fujii Y."/>
            <person name="Ozaki K."/>
            <person name="Hirao M."/>
            <person name="Ohmori Y."/>
            <person name="Kawabata A."/>
            <person name="Hikiji T."/>
            <person name="Kobatake N."/>
            <person name="Inagaki H."/>
            <person name="Ikema Y."/>
            <person name="Okamoto S."/>
            <person name="Okitani R."/>
            <person name="Kawakami T."/>
            <person name="Noguchi S."/>
            <person name="Itoh T."/>
            <person name="Shigeta K."/>
            <person name="Senba T."/>
            <person name="Matsumura K."/>
            <person name="Nakajima Y."/>
            <person name="Mizuno T."/>
            <person name="Morinaga M."/>
            <person name="Sasaki M."/>
            <person name="Togashi T."/>
            <person name="Oyama M."/>
            <person name="Hata H."/>
            <person name="Watanabe M."/>
            <person name="Komatsu T."/>
            <person name="Mizushima-Sugano J."/>
            <person name="Satoh T."/>
            <person name="Shirai Y."/>
            <person name="Takahashi Y."/>
            <person name="Nakagawa K."/>
            <person name="Okumura K."/>
            <person name="Nagase T."/>
            <person name="Nomura N."/>
            <person name="Kikuchi H."/>
            <person name="Masuho Y."/>
            <person name="Yamashita R."/>
            <person name="Nakai K."/>
            <person name="Yada T."/>
            <person name="Nakamura Y."/>
            <person name="Ohara O."/>
            <person name="Isogai T."/>
            <person name="Sugano S."/>
        </authorList>
    </citation>
    <scope>NUCLEOTIDE SEQUENCE [LARGE SCALE MRNA]</scope>
    <source>
        <tissue>Brain</tissue>
    </source>
</reference>
<reference key="7">
    <citation type="submission" date="2005-09" db="EMBL/GenBank/DDBJ databases">
        <authorList>
            <person name="Mural R.J."/>
            <person name="Istrail S."/>
            <person name="Sutton G.G."/>
            <person name="Florea L."/>
            <person name="Halpern A.L."/>
            <person name="Mobarry C.M."/>
            <person name="Lippert R."/>
            <person name="Walenz B."/>
            <person name="Shatkay H."/>
            <person name="Dew I."/>
            <person name="Miller J.R."/>
            <person name="Flanigan M.J."/>
            <person name="Edwards N.J."/>
            <person name="Bolanos R."/>
            <person name="Fasulo D."/>
            <person name="Halldorsson B.V."/>
            <person name="Hannenhalli S."/>
            <person name="Turner R."/>
            <person name="Yooseph S."/>
            <person name="Lu F."/>
            <person name="Nusskern D.R."/>
            <person name="Shue B.C."/>
            <person name="Zheng X.H."/>
            <person name="Zhong F."/>
            <person name="Delcher A.L."/>
            <person name="Huson D.H."/>
            <person name="Kravitz S.A."/>
            <person name="Mouchard L."/>
            <person name="Reinert K."/>
            <person name="Remington K.A."/>
            <person name="Clark A.G."/>
            <person name="Waterman M.S."/>
            <person name="Eichler E.E."/>
            <person name="Adams M.D."/>
            <person name="Hunkapiller M.W."/>
            <person name="Myers E.W."/>
            <person name="Venter J.C."/>
        </authorList>
    </citation>
    <scope>NUCLEOTIDE SEQUENCE [LARGE SCALE GENOMIC DNA]</scope>
</reference>
<reference key="8">
    <citation type="journal article" date="2004" name="Genome Res.">
        <title>The status, quality, and expansion of the NIH full-length cDNA project: the Mammalian Gene Collection (MGC).</title>
        <authorList>
            <consortium name="The MGC Project Team"/>
        </authorList>
    </citation>
    <scope>NUCLEOTIDE SEQUENCE [LARGE SCALE MRNA]</scope>
    <source>
        <tissue>B-cell</tissue>
        <tissue>Eye</tissue>
        <tissue>Muscle</tissue>
        <tissue>Ovary</tissue>
        <tissue>Skin</tissue>
        <tissue>Uterus</tissue>
    </source>
</reference>
<reference key="9">
    <citation type="journal article" date="1996" name="Eur. J. Biochem.">
        <title>Characterization of the human small-ribosomal-subunit proteins by N-terminal and internal sequencing, and mass spectrometry.</title>
        <authorList>
            <person name="Vladimirov S.N."/>
            <person name="Ivanov A.V."/>
            <person name="Karpova G.G."/>
            <person name="Musolyamov A.K."/>
            <person name="Egorov T.A."/>
            <person name="Thiede B."/>
            <person name="Wittmann-Liebold B."/>
            <person name="Otto A."/>
        </authorList>
    </citation>
    <scope>PROTEIN SEQUENCE OF 2-13</scope>
    <source>
        <tissue>Placenta</tissue>
    </source>
</reference>
<reference key="10">
    <citation type="journal article" date="1998" name="Genome Res.">
        <title>A map of 75 human ribosomal protein genes.</title>
        <authorList>
            <person name="Kenmochi N."/>
            <person name="Kawaguchi T."/>
            <person name="Rozen S."/>
            <person name="Davis E."/>
            <person name="Goodman N."/>
            <person name="Hudson T.J."/>
            <person name="Tanaka T."/>
            <person name="Page D.C."/>
        </authorList>
    </citation>
    <scope>NUCLEOTIDE SEQUENCE [GENOMIC DNA] OF 206-262</scope>
</reference>
<reference key="11">
    <citation type="journal article" date="1997" name="Gene">
        <title>The S3a ribosomal protein gene is identical to the Fte-1 (v-fos transformation effector) gene and the TNF-alpha-induced TU-11 gene, and its transcript level is altered in transformed and tumor cells.</title>
        <authorList>
            <person name="Lecomte F."/>
            <person name="Szpirer J."/>
            <person name="Szpirer C."/>
        </authorList>
    </citation>
    <scope>GENE NOMENCLATURE</scope>
</reference>
<reference key="12">
    <citation type="journal article" date="2002" name="EMBO J.">
        <title>Importins fulfill a dual function as nuclear import receptors and cytoplasmic chaperones for exposed basic domains.</title>
        <authorList>
            <person name="Jaekel S."/>
            <person name="Mingot J.-M."/>
            <person name="Schwarzmaier P."/>
            <person name="Hartmann E."/>
            <person name="Goerlich D."/>
        </authorList>
    </citation>
    <scope>INTERACTION WITH IPO4</scope>
</reference>
<reference key="13">
    <citation type="journal article" date="2003" name="Nature">
        <title>Proteomic characterization of the human centrosome by protein correlation profiling.</title>
        <authorList>
            <person name="Andersen J.S."/>
            <person name="Wilkinson C.J."/>
            <person name="Mayor T."/>
            <person name="Mortensen P."/>
            <person name="Nigg E.A."/>
            <person name="Mann M."/>
        </authorList>
    </citation>
    <scope>IDENTIFICATION BY MASS SPECTROMETRY</scope>
    <source>
        <tissue>Lymphoblast</tissue>
    </source>
</reference>
<reference key="14">
    <citation type="journal article" date="2005" name="Nat. Biotechnol.">
        <title>Immunoaffinity profiling of tyrosine phosphorylation in cancer cells.</title>
        <authorList>
            <person name="Rush J."/>
            <person name="Moritz A."/>
            <person name="Lee K.A."/>
            <person name="Guo A."/>
            <person name="Goss V.L."/>
            <person name="Spek E.J."/>
            <person name="Zhang H."/>
            <person name="Zha X.-M."/>
            <person name="Polakiewicz R.D."/>
            <person name="Comb M.J."/>
        </authorList>
    </citation>
    <scope>PHOSPHORYLATION [LARGE SCALE ANALYSIS] AT TYR-256</scope>
    <scope>IDENTIFICATION BY MASS SPECTROMETRY [LARGE SCALE ANALYSIS]</scope>
</reference>
<reference key="15">
    <citation type="journal article" date="2006" name="Cell">
        <title>Global, in vivo, and site-specific phosphorylation dynamics in signaling networks.</title>
        <authorList>
            <person name="Olsen J.V."/>
            <person name="Blagoev B."/>
            <person name="Gnad F."/>
            <person name="Macek B."/>
            <person name="Kumar C."/>
            <person name="Mortensen P."/>
            <person name="Mann M."/>
        </authorList>
    </citation>
    <scope>PHOSPHORYLATION [LARGE SCALE ANALYSIS] AT SER-263</scope>
    <scope>IDENTIFICATION BY MASS SPECTROMETRY [LARGE SCALE ANALYSIS]</scope>
    <source>
        <tissue>Cervix carcinoma</tissue>
    </source>
</reference>
<reference key="16">
    <citation type="journal article" date="2006" name="Nat. Biotechnol.">
        <title>A probability-based approach for high-throughput protein phosphorylation analysis and site localization.</title>
        <authorList>
            <person name="Beausoleil S.A."/>
            <person name="Villen J."/>
            <person name="Gerber S.A."/>
            <person name="Rush J."/>
            <person name="Gygi S.P."/>
        </authorList>
    </citation>
    <scope>PHOSPHORYLATION [LARGE SCALE ANALYSIS] AT SER-263</scope>
    <scope>IDENTIFICATION BY MASS SPECTROMETRY [LARGE SCALE ANALYSIS]</scope>
    <source>
        <tissue>Cervix carcinoma</tissue>
    </source>
</reference>
<reference key="17">
    <citation type="journal article" date="2007" name="Mol. Cell. Proteomics">
        <title>Molecular composition of IMP1 ribonucleoprotein granules.</title>
        <authorList>
            <person name="Joeson L."/>
            <person name="Vikesaa J."/>
            <person name="Krogh A."/>
            <person name="Nielsen L.K."/>
            <person name="Hansen T."/>
            <person name="Borup R."/>
            <person name="Johnsen A.H."/>
            <person name="Christiansen J."/>
            <person name="Nielsen F.C."/>
        </authorList>
    </citation>
    <scope>IDENTIFICATION IN A MRNP GRANULE COMPLEX</scope>
    <scope>IDENTIFICATION BY MASS SPECTROMETRY</scope>
    <scope>SUBCELLULAR LOCATION</scope>
</reference>
<reference key="18">
    <citation type="journal article" date="2008" name="Mol. Cell">
        <title>Kinase-selective enrichment enables quantitative phosphoproteomics of the kinome across the cell cycle.</title>
        <authorList>
            <person name="Daub H."/>
            <person name="Olsen J.V."/>
            <person name="Bairlein M."/>
            <person name="Gnad F."/>
            <person name="Oppermann F.S."/>
            <person name="Korner R."/>
            <person name="Greff Z."/>
            <person name="Keri G."/>
            <person name="Stemmann O."/>
            <person name="Mann M."/>
        </authorList>
    </citation>
    <scope>PHOSPHORYLATION [LARGE SCALE ANALYSIS] AT SER-263</scope>
    <scope>IDENTIFICATION BY MASS SPECTROMETRY [LARGE SCALE ANALYSIS]</scope>
    <source>
        <tissue>Cervix carcinoma</tissue>
    </source>
</reference>
<reference key="19">
    <citation type="journal article" date="2008" name="Proc. Natl. Acad. Sci. U.S.A.">
        <title>A quantitative atlas of mitotic phosphorylation.</title>
        <authorList>
            <person name="Dephoure N."/>
            <person name="Zhou C."/>
            <person name="Villen J."/>
            <person name="Beausoleil S.A."/>
            <person name="Bakalarski C.E."/>
            <person name="Elledge S.J."/>
            <person name="Gygi S.P."/>
        </authorList>
    </citation>
    <scope>PHOSPHORYLATION [LARGE SCALE ANALYSIS] AT SER-263</scope>
    <scope>IDENTIFICATION BY MASS SPECTROMETRY [LARGE SCALE ANALYSIS]</scope>
    <source>
        <tissue>Cervix carcinoma</tissue>
    </source>
</reference>
<reference key="20">
    <citation type="journal article" date="2009" name="Anal. Chem.">
        <title>Lys-N and trypsin cover complementary parts of the phosphoproteome in a refined SCX-based approach.</title>
        <authorList>
            <person name="Gauci S."/>
            <person name="Helbig A.O."/>
            <person name="Slijper M."/>
            <person name="Krijgsveld J."/>
            <person name="Heck A.J."/>
            <person name="Mohammed S."/>
        </authorList>
    </citation>
    <scope>IDENTIFICATION BY MASS SPECTROMETRY [LARGE SCALE ANALYSIS]</scope>
</reference>
<reference key="21">
    <citation type="journal article" date="2009" name="Science">
        <title>Lysine acetylation targets protein complexes and co-regulates major cellular functions.</title>
        <authorList>
            <person name="Choudhary C."/>
            <person name="Kumar C."/>
            <person name="Gnad F."/>
            <person name="Nielsen M.L."/>
            <person name="Rehman M."/>
            <person name="Walther T.C."/>
            <person name="Olsen J.V."/>
            <person name="Mann M."/>
        </authorList>
    </citation>
    <scope>ACETYLATION [LARGE SCALE ANALYSIS] AT LYS-34 AND LYS-249</scope>
    <scope>IDENTIFICATION BY MASS SPECTROMETRY [LARGE SCALE ANALYSIS]</scope>
</reference>
<reference key="22">
    <citation type="journal article" date="2010" name="Sci. Signal.">
        <title>Quantitative phosphoproteomics reveals widespread full phosphorylation site occupancy during mitosis.</title>
        <authorList>
            <person name="Olsen J.V."/>
            <person name="Vermeulen M."/>
            <person name="Santamaria A."/>
            <person name="Kumar C."/>
            <person name="Miller M.L."/>
            <person name="Jensen L.J."/>
            <person name="Gnad F."/>
            <person name="Cox J."/>
            <person name="Jensen T.S."/>
            <person name="Nigg E.A."/>
            <person name="Brunak S."/>
            <person name="Mann M."/>
        </authorList>
    </citation>
    <scope>PHOSPHORYLATION [LARGE SCALE ANALYSIS] AT SER-263</scope>
    <scope>IDENTIFICATION BY MASS SPECTROMETRY [LARGE SCALE ANALYSIS]</scope>
    <source>
        <tissue>Cervix carcinoma</tissue>
    </source>
</reference>
<reference key="23">
    <citation type="journal article" date="2011" name="BMC Syst. Biol.">
        <title>Initial characterization of the human central proteome.</title>
        <authorList>
            <person name="Burkard T.R."/>
            <person name="Planyavsky M."/>
            <person name="Kaupe I."/>
            <person name="Breitwieser F.P."/>
            <person name="Buerckstuemmer T."/>
            <person name="Bennett K.L."/>
            <person name="Superti-Furga G."/>
            <person name="Colinge J."/>
        </authorList>
    </citation>
    <scope>IDENTIFICATION BY MASS SPECTROMETRY [LARGE SCALE ANALYSIS]</scope>
</reference>
<reference key="24">
    <citation type="journal article" date="2011" name="Sci. Signal.">
        <title>System-wide temporal characterization of the proteome and phosphoproteome of human embryonic stem cell differentiation.</title>
        <authorList>
            <person name="Rigbolt K.T."/>
            <person name="Prokhorova T.A."/>
            <person name="Akimov V."/>
            <person name="Henningsen J."/>
            <person name="Johansen P.T."/>
            <person name="Kratchmarova I."/>
            <person name="Kassem M."/>
            <person name="Mann M."/>
            <person name="Olsen J.V."/>
            <person name="Blagoev B."/>
        </authorList>
    </citation>
    <scope>PHOSPHORYLATION [LARGE SCALE ANALYSIS] AT SER-263</scope>
    <scope>IDENTIFICATION BY MASS SPECTROMETRY [LARGE SCALE ANALYSIS]</scope>
</reference>
<reference key="25">
    <citation type="journal article" date="2012" name="Proc. Natl. Acad. Sci. U.S.A.">
        <title>N-terminal acetylome analyses and functional insights of the N-terminal acetyltransferase NatB.</title>
        <authorList>
            <person name="Van Damme P."/>
            <person name="Lasa M."/>
            <person name="Polevoda B."/>
            <person name="Gazquez C."/>
            <person name="Elosegui-Artola A."/>
            <person name="Kim D.S."/>
            <person name="De Juan-Pardo E."/>
            <person name="Demeyer K."/>
            <person name="Hole K."/>
            <person name="Larrea E."/>
            <person name="Timmerman E."/>
            <person name="Prieto J."/>
            <person name="Arnesen T."/>
            <person name="Sherman F."/>
            <person name="Gevaert K."/>
            <person name="Aldabe R."/>
        </authorList>
    </citation>
    <scope>IDENTIFICATION BY MASS SPECTROMETRY [LARGE SCALE ANALYSIS]</scope>
</reference>
<reference key="26">
    <citation type="journal article" date="2013" name="J. Proteome Res.">
        <title>Toward a comprehensive characterization of a human cancer cell phosphoproteome.</title>
        <authorList>
            <person name="Zhou H."/>
            <person name="Di Palma S."/>
            <person name="Preisinger C."/>
            <person name="Peng M."/>
            <person name="Polat A.N."/>
            <person name="Heck A.J."/>
            <person name="Mohammed S."/>
        </authorList>
    </citation>
    <scope>PHOSPHORYLATION [LARGE SCALE ANALYSIS] AT SER-236</scope>
    <scope>IDENTIFICATION BY MASS SPECTROMETRY [LARGE SCALE ANALYSIS]</scope>
    <source>
        <tissue>Cervix carcinoma</tissue>
        <tissue>Erythroleukemia</tissue>
    </source>
</reference>
<reference key="27">
    <citation type="journal article" date="2014" name="Curr. Opin. Struct. Biol.">
        <title>A new system for naming ribosomal proteins.</title>
        <authorList>
            <person name="Ban N."/>
            <person name="Beckmann R."/>
            <person name="Cate J.H.D."/>
            <person name="Dinman J.D."/>
            <person name="Dragon F."/>
            <person name="Ellis S.R."/>
            <person name="Lafontaine D.L.J."/>
            <person name="Lindahl L."/>
            <person name="Liljas A."/>
            <person name="Lipton J.M."/>
            <person name="McAlear M.A."/>
            <person name="Moore P.B."/>
            <person name="Noller H.F."/>
            <person name="Ortega J."/>
            <person name="Panse V.G."/>
            <person name="Ramakrishnan V."/>
            <person name="Spahn C.M.T."/>
            <person name="Steitz T.A."/>
            <person name="Tchorzewski M."/>
            <person name="Tollervey D."/>
            <person name="Warren A.J."/>
            <person name="Williamson J.R."/>
            <person name="Wilson D."/>
            <person name="Yonath A."/>
            <person name="Yusupov M."/>
        </authorList>
    </citation>
    <scope>NOMENCLATURE</scope>
</reference>
<reference key="28">
    <citation type="journal article" date="2014" name="J. Proteomics">
        <title>An enzyme assisted RP-RPLC approach for in-depth analysis of human liver phosphoproteome.</title>
        <authorList>
            <person name="Bian Y."/>
            <person name="Song C."/>
            <person name="Cheng K."/>
            <person name="Dong M."/>
            <person name="Wang F."/>
            <person name="Huang J."/>
            <person name="Sun D."/>
            <person name="Wang L."/>
            <person name="Ye M."/>
            <person name="Zou H."/>
        </authorList>
    </citation>
    <scope>PHOSPHORYLATION [LARGE SCALE ANALYSIS] AT SER-263</scope>
    <scope>IDENTIFICATION BY MASS SPECTROMETRY [LARGE SCALE ANALYSIS]</scope>
    <source>
        <tissue>Liver</tissue>
    </source>
</reference>
<reference key="29">
    <citation type="journal article" date="2015" name="Mol. Cell. Proteomics">
        <title>System-wide analysis of SUMOylation dynamics in response to replication stress reveals novel small ubiquitin-like modified target proteins and acceptor lysines relevant for genome stability.</title>
        <authorList>
            <person name="Xiao Z."/>
            <person name="Chang J.G."/>
            <person name="Hendriks I.A."/>
            <person name="Sigurdsson J.O."/>
            <person name="Olsen J.V."/>
            <person name="Vertegaal A.C."/>
        </authorList>
    </citation>
    <scope>SUMOYLATION [LARGE SCALE ANALYSIS] AT LYS-249</scope>
    <scope>IDENTIFICATION BY MASS SPECTROMETRY [LARGE SCALE ANALYSIS]</scope>
</reference>
<reference key="30">
    <citation type="journal article" date="2015" name="Proteomics">
        <title>N-terminome analysis of the human mitochondrial proteome.</title>
        <authorList>
            <person name="Vaca Jacome A.S."/>
            <person name="Rabilloud T."/>
            <person name="Schaeffer-Reiss C."/>
            <person name="Rompais M."/>
            <person name="Ayoub D."/>
            <person name="Lane L."/>
            <person name="Bairoch A."/>
            <person name="Van Dorsselaer A."/>
            <person name="Carapito C."/>
        </authorList>
    </citation>
    <scope>IDENTIFICATION BY MASS SPECTROMETRY [LARGE SCALE ANALYSIS]</scope>
</reference>
<reference key="31">
    <citation type="journal article" date="2017" name="Nat. Struct. Mol. Biol.">
        <title>Site-specific mapping of the human SUMO proteome reveals co-modification with phosphorylation.</title>
        <authorList>
            <person name="Hendriks I.A."/>
            <person name="Lyon D."/>
            <person name="Young C."/>
            <person name="Jensen L.J."/>
            <person name="Vertegaal A.C."/>
            <person name="Nielsen M.L."/>
        </authorList>
    </citation>
    <scope>SUMOYLATION [LARGE SCALE ANALYSIS] AT LYS-34 AND LYS-249</scope>
    <scope>IDENTIFICATION BY MASS SPECTROMETRY [LARGE SCALE ANALYSIS]</scope>
</reference>
<reference key="32">
    <citation type="journal article" date="2018" name="EMBO Rep.">
        <title>Comprehensive ADP-ribosylome analysis identifies tyrosine as an ADP-ribose acceptor site.</title>
        <authorList>
            <person name="Leslie Pedrioli D.M."/>
            <person name="Leutert M."/>
            <person name="Bilan V."/>
            <person name="Nowak K."/>
            <person name="Gunasekera K."/>
            <person name="Ferrari E."/>
            <person name="Imhof R."/>
            <person name="Malmstroem L."/>
            <person name="Hottiger M.O."/>
        </authorList>
    </citation>
    <scope>ADP-RIBOSYLATION AT TYR-155</scope>
    <scope>MUTAGENESIS OF TYR-155</scope>
</reference>
<reference key="33">
    <citation type="journal article" date="2013" name="Nature">
        <title>Structures of the human and Drosophila 80S ribosome.</title>
        <authorList>
            <person name="Anger A.M."/>
            <person name="Armache J.P."/>
            <person name="Berninghausen O."/>
            <person name="Habeck M."/>
            <person name="Subklewe M."/>
            <person name="Wilson D.N."/>
            <person name="Beckmann R."/>
        </authorList>
    </citation>
    <scope>STRUCTURE BY ELECTRON MICROSCOPY (5.0 ANGSTROMS) OF 80S RIBOSOME</scope>
    <scope>FUNCTION</scope>
    <scope>SUBUNIT</scope>
    <scope>SUBCELLULAR LOCATION</scope>
</reference>
<reference evidence="11 12 13" key="34">
    <citation type="journal article" date="2021" name="Science">
        <title>Nucleolar maturation of the human small subunit processome.</title>
        <authorList>
            <person name="Singh S."/>
            <person name="Vanden Broeck A."/>
            <person name="Miller L."/>
            <person name="Chaker-Margot M."/>
            <person name="Klinge S."/>
        </authorList>
    </citation>
    <scope>STRUCTURE BY ELECTRON MICROSCOPY (2.70 ANGSTROMS)</scope>
    <scope>FUNCTION</scope>
    <scope>SUBUNIT</scope>
    <scope>SUBCELLULAR LOCATION</scope>
</reference>
<dbReference type="EMBL" id="M77234">
    <property type="protein sequence ID" value="AAA60290.1"/>
    <property type="molecule type" value="mRNA"/>
</dbReference>
<dbReference type="EMBL" id="M84711">
    <property type="protein sequence ID" value="AAA58487.1"/>
    <property type="molecule type" value="mRNA"/>
</dbReference>
<dbReference type="EMBL" id="L13802">
    <property type="protein sequence ID" value="AAA35682.1"/>
    <property type="molecule type" value="mRNA"/>
</dbReference>
<dbReference type="EMBL" id="X87373">
    <property type="protein sequence ID" value="CAA60827.1"/>
    <property type="molecule type" value="Genomic_DNA"/>
</dbReference>
<dbReference type="EMBL" id="AC095055">
    <property type="status" value="NOT_ANNOTATED_CDS"/>
    <property type="molecule type" value="Genomic_DNA"/>
</dbReference>
<dbReference type="EMBL" id="AK311788">
    <property type="protein sequence ID" value="BAG34731.1"/>
    <property type="molecule type" value="mRNA"/>
</dbReference>
<dbReference type="EMBL" id="CH471056">
    <property type="protein sequence ID" value="EAX04991.1"/>
    <property type="molecule type" value="Genomic_DNA"/>
</dbReference>
<dbReference type="EMBL" id="CH471056">
    <property type="protein sequence ID" value="EAX04995.1"/>
    <property type="molecule type" value="Genomic_DNA"/>
</dbReference>
<dbReference type="EMBL" id="BC000204">
    <property type="protein sequence ID" value="AAH00204.1"/>
    <property type="molecule type" value="mRNA"/>
</dbReference>
<dbReference type="EMBL" id="BC001708">
    <property type="protein sequence ID" value="AAH01708.1"/>
    <property type="molecule type" value="mRNA"/>
</dbReference>
<dbReference type="EMBL" id="BC004981">
    <property type="protein sequence ID" value="AAH04981.1"/>
    <property type="molecule type" value="mRNA"/>
</dbReference>
<dbReference type="EMBL" id="BC006298">
    <property type="protein sequence ID" value="AAH06298.1"/>
    <property type="molecule type" value="mRNA"/>
</dbReference>
<dbReference type="EMBL" id="BC009219">
    <property type="protein sequence ID" value="AAH09219.1"/>
    <property type="molecule type" value="mRNA"/>
</dbReference>
<dbReference type="EMBL" id="BC009404">
    <property type="protein sequence ID" value="AAH09404.1"/>
    <property type="molecule type" value="mRNA"/>
</dbReference>
<dbReference type="EMBL" id="BC017123">
    <property type="protein sequence ID" value="AAH17123.1"/>
    <property type="molecule type" value="mRNA"/>
</dbReference>
<dbReference type="EMBL" id="BC019072">
    <property type="protein sequence ID" value="AAH19072.1"/>
    <property type="molecule type" value="mRNA"/>
</dbReference>
<dbReference type="EMBL" id="BC030161">
    <property type="protein sequence ID" value="AAH30161.1"/>
    <property type="molecule type" value="mRNA"/>
</dbReference>
<dbReference type="EMBL" id="BC070211">
    <property type="protein sequence ID" value="AAH70211.1"/>
    <property type="molecule type" value="mRNA"/>
</dbReference>
<dbReference type="EMBL" id="BC071916">
    <property type="protein sequence ID" value="AAH71916.1"/>
    <property type="molecule type" value="mRNA"/>
</dbReference>
<dbReference type="EMBL" id="AB007148">
    <property type="protein sequence ID" value="BAA25814.1"/>
    <property type="molecule type" value="Genomic_DNA"/>
</dbReference>
<dbReference type="CCDS" id="CCDS3775.1"/>
<dbReference type="PIR" id="JC4662">
    <property type="entry name" value="JC4662"/>
</dbReference>
<dbReference type="RefSeq" id="NP_000997.1">
    <property type="nucleotide sequence ID" value="NM_001006.5"/>
</dbReference>
<dbReference type="PDB" id="4UG0">
    <property type="method" value="EM"/>
    <property type="chains" value="SB=1-264"/>
</dbReference>
<dbReference type="PDB" id="4V6X">
    <property type="method" value="EM"/>
    <property type="resolution" value="5.00 A"/>
    <property type="chains" value="AB=1-264"/>
</dbReference>
<dbReference type="PDB" id="5A2Q">
    <property type="method" value="EM"/>
    <property type="resolution" value="3.90 A"/>
    <property type="chains" value="B=1-264"/>
</dbReference>
<dbReference type="PDB" id="5AJ0">
    <property type="method" value="EM"/>
    <property type="resolution" value="3.50 A"/>
    <property type="chains" value="BB=1-264"/>
</dbReference>
<dbReference type="PDB" id="5FLX">
    <property type="method" value="EM"/>
    <property type="resolution" value="3.90 A"/>
    <property type="chains" value="B=1-264"/>
</dbReference>
<dbReference type="PDB" id="5LKS">
    <property type="method" value="EM"/>
    <property type="resolution" value="3.60 A"/>
    <property type="chains" value="SB=1-264"/>
</dbReference>
<dbReference type="PDB" id="5OA3">
    <property type="method" value="EM"/>
    <property type="resolution" value="4.30 A"/>
    <property type="chains" value="B=1-264"/>
</dbReference>
<dbReference type="PDB" id="5T2C">
    <property type="method" value="EM"/>
    <property type="resolution" value="3.60 A"/>
    <property type="chains" value="Ap=1-264"/>
</dbReference>
<dbReference type="PDB" id="5VYC">
    <property type="method" value="X-ray"/>
    <property type="resolution" value="6.00 A"/>
    <property type="chains" value="B1/B2/B3/B4/B5/B6=1-264"/>
</dbReference>
<dbReference type="PDB" id="6FEC">
    <property type="method" value="EM"/>
    <property type="resolution" value="6.30 A"/>
    <property type="chains" value="i=19-233"/>
</dbReference>
<dbReference type="PDB" id="6G18">
    <property type="method" value="EM"/>
    <property type="resolution" value="3.60 A"/>
    <property type="chains" value="B=1-264"/>
</dbReference>
<dbReference type="PDB" id="6G4S">
    <property type="method" value="EM"/>
    <property type="resolution" value="4.00 A"/>
    <property type="chains" value="B=1-264"/>
</dbReference>
<dbReference type="PDB" id="6G4W">
    <property type="method" value="EM"/>
    <property type="resolution" value="4.50 A"/>
    <property type="chains" value="B=1-264"/>
</dbReference>
<dbReference type="PDB" id="6G51">
    <property type="method" value="EM"/>
    <property type="resolution" value="4.10 A"/>
    <property type="chains" value="B=1-264"/>
</dbReference>
<dbReference type="PDB" id="6G53">
    <property type="method" value="EM"/>
    <property type="resolution" value="4.50 A"/>
    <property type="chains" value="B=1-264"/>
</dbReference>
<dbReference type="PDB" id="6G5H">
    <property type="method" value="EM"/>
    <property type="resolution" value="3.60 A"/>
    <property type="chains" value="B=1-264"/>
</dbReference>
<dbReference type="PDB" id="6G5I">
    <property type="method" value="EM"/>
    <property type="resolution" value="3.50 A"/>
    <property type="chains" value="B=1-264"/>
</dbReference>
<dbReference type="PDB" id="6IP5">
    <property type="method" value="EM"/>
    <property type="resolution" value="3.90 A"/>
    <property type="chains" value="2o=1-264"/>
</dbReference>
<dbReference type="PDB" id="6IP6">
    <property type="method" value="EM"/>
    <property type="resolution" value="4.50 A"/>
    <property type="chains" value="2o=1-264"/>
</dbReference>
<dbReference type="PDB" id="6IP8">
    <property type="method" value="EM"/>
    <property type="resolution" value="3.90 A"/>
    <property type="chains" value="2o=1-264"/>
</dbReference>
<dbReference type="PDB" id="6OLE">
    <property type="method" value="EM"/>
    <property type="resolution" value="3.10 A"/>
    <property type="chains" value="SB=21-234"/>
</dbReference>
<dbReference type="PDB" id="6OLF">
    <property type="method" value="EM"/>
    <property type="resolution" value="3.90 A"/>
    <property type="chains" value="SB=21-234"/>
</dbReference>
<dbReference type="PDB" id="6OLG">
    <property type="method" value="EM"/>
    <property type="resolution" value="3.40 A"/>
    <property type="chains" value="BB=22-233"/>
</dbReference>
<dbReference type="PDB" id="6OLI">
    <property type="method" value="EM"/>
    <property type="resolution" value="3.50 A"/>
    <property type="chains" value="SB=21-234"/>
</dbReference>
<dbReference type="PDB" id="6OLZ">
    <property type="method" value="EM"/>
    <property type="resolution" value="3.90 A"/>
    <property type="chains" value="BB=22-233"/>
</dbReference>
<dbReference type="PDB" id="6OM0">
    <property type="method" value="EM"/>
    <property type="resolution" value="3.10 A"/>
    <property type="chains" value="SB=21-234"/>
</dbReference>
<dbReference type="PDB" id="6OM7">
    <property type="method" value="EM"/>
    <property type="resolution" value="3.70 A"/>
    <property type="chains" value="SB=21-234"/>
</dbReference>
<dbReference type="PDB" id="6QZP">
    <property type="method" value="EM"/>
    <property type="resolution" value="2.90 A"/>
    <property type="chains" value="SB=21-234"/>
</dbReference>
<dbReference type="PDB" id="6XA1">
    <property type="method" value="EM"/>
    <property type="resolution" value="2.80 A"/>
    <property type="chains" value="SB=22-232"/>
</dbReference>
<dbReference type="PDB" id="6Y0G">
    <property type="method" value="EM"/>
    <property type="resolution" value="3.20 A"/>
    <property type="chains" value="SB=1-264"/>
</dbReference>
<dbReference type="PDB" id="6Y2L">
    <property type="method" value="EM"/>
    <property type="resolution" value="3.00 A"/>
    <property type="chains" value="SB=1-264"/>
</dbReference>
<dbReference type="PDB" id="6Y57">
    <property type="method" value="EM"/>
    <property type="resolution" value="3.50 A"/>
    <property type="chains" value="SB=1-264"/>
</dbReference>
<dbReference type="PDB" id="6YBD">
    <property type="method" value="EM"/>
    <property type="resolution" value="3.30 A"/>
    <property type="chains" value="O=1-264"/>
</dbReference>
<dbReference type="PDB" id="6YBW">
    <property type="method" value="EM"/>
    <property type="resolution" value="3.10 A"/>
    <property type="chains" value="O=1-264"/>
</dbReference>
<dbReference type="PDB" id="6Z6L">
    <property type="method" value="EM"/>
    <property type="resolution" value="3.00 A"/>
    <property type="chains" value="SB=1-264"/>
</dbReference>
<dbReference type="PDB" id="6Z6M">
    <property type="method" value="EM"/>
    <property type="resolution" value="3.10 A"/>
    <property type="chains" value="SB=1-264"/>
</dbReference>
<dbReference type="PDB" id="6Z6N">
    <property type="method" value="EM"/>
    <property type="resolution" value="2.90 A"/>
    <property type="chains" value="SB=1-264"/>
</dbReference>
<dbReference type="PDB" id="6ZLW">
    <property type="method" value="EM"/>
    <property type="resolution" value="2.60 A"/>
    <property type="chains" value="C=1-264"/>
</dbReference>
<dbReference type="PDB" id="6ZM7">
    <property type="method" value="EM"/>
    <property type="resolution" value="2.70 A"/>
    <property type="chains" value="SB=1-264"/>
</dbReference>
<dbReference type="PDB" id="6ZME">
    <property type="method" value="EM"/>
    <property type="resolution" value="3.00 A"/>
    <property type="chains" value="SB=1-264"/>
</dbReference>
<dbReference type="PDB" id="6ZMI">
    <property type="method" value="EM"/>
    <property type="resolution" value="2.60 A"/>
    <property type="chains" value="SB=1-264"/>
</dbReference>
<dbReference type="PDB" id="6ZMO">
    <property type="method" value="EM"/>
    <property type="resolution" value="3.10 A"/>
    <property type="chains" value="SB=1-264"/>
</dbReference>
<dbReference type="PDB" id="6ZMT">
    <property type="method" value="EM"/>
    <property type="resolution" value="3.00 A"/>
    <property type="chains" value="C=1-264"/>
</dbReference>
<dbReference type="PDB" id="6ZMW">
    <property type="method" value="EM"/>
    <property type="resolution" value="3.70 A"/>
    <property type="chains" value="O=1-264"/>
</dbReference>
<dbReference type="PDB" id="6ZN5">
    <property type="method" value="EM"/>
    <property type="resolution" value="3.20 A"/>
    <property type="chains" value="C=21-233"/>
</dbReference>
<dbReference type="PDB" id="6ZOJ">
    <property type="method" value="EM"/>
    <property type="resolution" value="2.80 A"/>
    <property type="chains" value="B=1-264"/>
</dbReference>
<dbReference type="PDB" id="6ZOK">
    <property type="method" value="EM"/>
    <property type="resolution" value="2.80 A"/>
    <property type="chains" value="B=1-264"/>
</dbReference>
<dbReference type="PDB" id="6ZON">
    <property type="method" value="EM"/>
    <property type="resolution" value="3.00 A"/>
    <property type="chains" value="p=1-264"/>
</dbReference>
<dbReference type="PDB" id="6ZP4">
    <property type="method" value="EM"/>
    <property type="resolution" value="2.90 A"/>
    <property type="chains" value="p=1-264"/>
</dbReference>
<dbReference type="PDB" id="6ZUO">
    <property type="method" value="EM"/>
    <property type="resolution" value="3.10 A"/>
    <property type="chains" value="B=1-264"/>
</dbReference>
<dbReference type="PDB" id="6ZV6">
    <property type="method" value="EM"/>
    <property type="resolution" value="2.90 A"/>
    <property type="chains" value="B=1-264"/>
</dbReference>
<dbReference type="PDB" id="6ZVH">
    <property type="method" value="EM"/>
    <property type="resolution" value="2.90 A"/>
    <property type="chains" value="B=1-264"/>
</dbReference>
<dbReference type="PDB" id="6ZVJ">
    <property type="method" value="EM"/>
    <property type="resolution" value="3.80 A"/>
    <property type="chains" value="p=23-233"/>
</dbReference>
<dbReference type="PDB" id="6ZXD">
    <property type="method" value="EM"/>
    <property type="resolution" value="3.20 A"/>
    <property type="chains" value="B=1-264"/>
</dbReference>
<dbReference type="PDB" id="6ZXE">
    <property type="method" value="EM"/>
    <property type="resolution" value="3.00 A"/>
    <property type="chains" value="B=1-264"/>
</dbReference>
<dbReference type="PDB" id="6ZXF">
    <property type="method" value="EM"/>
    <property type="resolution" value="3.70 A"/>
    <property type="chains" value="B=1-264"/>
</dbReference>
<dbReference type="PDB" id="6ZXG">
    <property type="method" value="EM"/>
    <property type="resolution" value="2.60 A"/>
    <property type="chains" value="B=1-264"/>
</dbReference>
<dbReference type="PDB" id="6ZXH">
    <property type="method" value="EM"/>
    <property type="resolution" value="2.70 A"/>
    <property type="chains" value="B=1-264"/>
</dbReference>
<dbReference type="PDB" id="7A09">
    <property type="method" value="EM"/>
    <property type="resolution" value="3.50 A"/>
    <property type="chains" value="p=1-264"/>
</dbReference>
<dbReference type="PDB" id="7K5I">
    <property type="method" value="EM"/>
    <property type="resolution" value="2.90 A"/>
    <property type="chains" value="B=1-264"/>
</dbReference>
<dbReference type="PDB" id="7MQ8">
    <property type="method" value="EM"/>
    <property type="resolution" value="3.60 A"/>
    <property type="chains" value="NM=1-264"/>
</dbReference>
<dbReference type="PDB" id="7MQ9">
    <property type="method" value="EM"/>
    <property type="resolution" value="3.87 A"/>
    <property type="chains" value="NM=1-264"/>
</dbReference>
<dbReference type="PDB" id="7MQA">
    <property type="method" value="EM"/>
    <property type="resolution" value="2.70 A"/>
    <property type="chains" value="NM=1-264"/>
</dbReference>
<dbReference type="PDB" id="7QP6">
    <property type="method" value="EM"/>
    <property type="resolution" value="4.70 A"/>
    <property type="chains" value="O=1-264"/>
</dbReference>
<dbReference type="PDB" id="7QP7">
    <property type="method" value="EM"/>
    <property type="resolution" value="3.70 A"/>
    <property type="chains" value="O=1-264"/>
</dbReference>
<dbReference type="PDB" id="7QVP">
    <property type="method" value="EM"/>
    <property type="resolution" value="3.00 A"/>
    <property type="chains" value="RB/SB=1-264"/>
</dbReference>
<dbReference type="PDB" id="7R4X">
    <property type="method" value="EM"/>
    <property type="resolution" value="2.15 A"/>
    <property type="chains" value="B=1-264"/>
</dbReference>
<dbReference type="PDB" id="7TQL">
    <property type="method" value="EM"/>
    <property type="resolution" value="3.40 A"/>
    <property type="chains" value="B/C=21-233"/>
</dbReference>
<dbReference type="PDB" id="7WTS">
    <property type="method" value="EM"/>
    <property type="resolution" value="3.20 A"/>
    <property type="chains" value="B=1-264"/>
</dbReference>
<dbReference type="PDB" id="7WTT">
    <property type="method" value="EM"/>
    <property type="resolution" value="3.10 A"/>
    <property type="chains" value="B=1-264"/>
</dbReference>
<dbReference type="PDB" id="7WTU">
    <property type="method" value="EM"/>
    <property type="resolution" value="3.00 A"/>
    <property type="chains" value="B=1-264"/>
</dbReference>
<dbReference type="PDB" id="7WTV">
    <property type="method" value="EM"/>
    <property type="resolution" value="3.50 A"/>
    <property type="chains" value="B=1-264"/>
</dbReference>
<dbReference type="PDB" id="7WTW">
    <property type="method" value="EM"/>
    <property type="resolution" value="3.20 A"/>
    <property type="chains" value="B=1-264"/>
</dbReference>
<dbReference type="PDB" id="7WTX">
    <property type="method" value="EM"/>
    <property type="resolution" value="3.10 A"/>
    <property type="chains" value="B=1-264"/>
</dbReference>
<dbReference type="PDB" id="7WTZ">
    <property type="method" value="EM"/>
    <property type="resolution" value="3.00 A"/>
    <property type="chains" value="B=1-264"/>
</dbReference>
<dbReference type="PDB" id="7WU0">
    <property type="method" value="EM"/>
    <property type="resolution" value="3.30 A"/>
    <property type="chains" value="B=1-264"/>
</dbReference>
<dbReference type="PDB" id="7XNX">
    <property type="method" value="EM"/>
    <property type="resolution" value="2.70 A"/>
    <property type="chains" value="SB=1-264"/>
</dbReference>
<dbReference type="PDB" id="7XNY">
    <property type="method" value="EM"/>
    <property type="resolution" value="2.50 A"/>
    <property type="chains" value="SB=1-264"/>
</dbReference>
<dbReference type="PDB" id="8G5Y">
    <property type="method" value="EM"/>
    <property type="resolution" value="2.29 A"/>
    <property type="chains" value="SB=1-264"/>
</dbReference>
<dbReference type="PDB" id="8G5Z">
    <property type="method" value="EM"/>
    <property type="resolution" value="2.64 A"/>
    <property type="chains" value="SB=2-234"/>
</dbReference>
<dbReference type="PDB" id="8G60">
    <property type="method" value="EM"/>
    <property type="resolution" value="2.54 A"/>
    <property type="chains" value="SB=1-264"/>
</dbReference>
<dbReference type="PDB" id="8G61">
    <property type="method" value="EM"/>
    <property type="resolution" value="2.94 A"/>
    <property type="chains" value="SB=1-264"/>
</dbReference>
<dbReference type="PDB" id="8G6J">
    <property type="method" value="EM"/>
    <property type="resolution" value="2.80 A"/>
    <property type="chains" value="SB=1-264"/>
</dbReference>
<dbReference type="PDB" id="8GLP">
    <property type="method" value="EM"/>
    <property type="resolution" value="1.67 A"/>
    <property type="chains" value="SB=1-264"/>
</dbReference>
<dbReference type="PDB" id="8IFD">
    <property type="method" value="EM"/>
    <property type="resolution" value="2.59 A"/>
    <property type="chains" value="2o=1-264"/>
</dbReference>
<dbReference type="PDB" id="8IFE">
    <property type="method" value="EM"/>
    <property type="resolution" value="2.57 A"/>
    <property type="chains" value="2o=1-264"/>
</dbReference>
<dbReference type="PDB" id="8JDJ">
    <property type="method" value="EM"/>
    <property type="resolution" value="2.50 A"/>
    <property type="chains" value="y=1-264"/>
</dbReference>
<dbReference type="PDB" id="8JDK">
    <property type="method" value="EM"/>
    <property type="resolution" value="2.26 A"/>
    <property type="chains" value="y=1-264"/>
</dbReference>
<dbReference type="PDB" id="8JDL">
    <property type="method" value="EM"/>
    <property type="resolution" value="2.42 A"/>
    <property type="chains" value="y=1-264"/>
</dbReference>
<dbReference type="PDB" id="8JDM">
    <property type="method" value="EM"/>
    <property type="resolution" value="2.67 A"/>
    <property type="chains" value="y=1-264"/>
</dbReference>
<dbReference type="PDB" id="8K2C">
    <property type="method" value="EM"/>
    <property type="resolution" value="2.40 A"/>
    <property type="chains" value="SB=1-264"/>
</dbReference>
<dbReference type="PDB" id="8OZ0">
    <property type="method" value="EM"/>
    <property type="resolution" value="3.50 A"/>
    <property type="chains" value="P=1-264"/>
</dbReference>
<dbReference type="PDB" id="8PJ1">
    <property type="method" value="EM"/>
    <property type="resolution" value="3.40 A"/>
    <property type="chains" value="O=1-264"/>
</dbReference>
<dbReference type="PDB" id="8PJ2">
    <property type="method" value="EM"/>
    <property type="resolution" value="3.40 A"/>
    <property type="chains" value="O=1-264"/>
</dbReference>
<dbReference type="PDB" id="8PJ3">
    <property type="method" value="EM"/>
    <property type="resolution" value="3.70 A"/>
    <property type="chains" value="O=1-264"/>
</dbReference>
<dbReference type="PDB" id="8PJ4">
    <property type="method" value="EM"/>
    <property type="resolution" value="3.20 A"/>
    <property type="chains" value="O=1-264"/>
</dbReference>
<dbReference type="PDB" id="8PJ5">
    <property type="method" value="EM"/>
    <property type="resolution" value="2.90 A"/>
    <property type="chains" value="O=1-264"/>
</dbReference>
<dbReference type="PDB" id="8PJ6">
    <property type="method" value="EM"/>
    <property type="resolution" value="2.90 A"/>
    <property type="chains" value="O=1-264"/>
</dbReference>
<dbReference type="PDB" id="8PPK">
    <property type="method" value="EM"/>
    <property type="resolution" value="2.98 A"/>
    <property type="chains" value="B=1-264"/>
</dbReference>
<dbReference type="PDB" id="8PPL">
    <property type="method" value="EM"/>
    <property type="resolution" value="2.65 A"/>
    <property type="chains" value="AB=1-264"/>
</dbReference>
<dbReference type="PDB" id="8QOI">
    <property type="method" value="EM"/>
    <property type="resolution" value="1.90 A"/>
    <property type="chains" value="SB=1-264"/>
</dbReference>
<dbReference type="PDB" id="8RG0">
    <property type="method" value="EM"/>
    <property type="resolution" value="3.40 A"/>
    <property type="chains" value="O=1-264"/>
</dbReference>
<dbReference type="PDB" id="8T4S">
    <property type="method" value="EM"/>
    <property type="resolution" value="2.60 A"/>
    <property type="chains" value="B=1-264"/>
</dbReference>
<dbReference type="PDB" id="8UKB">
    <property type="method" value="EM"/>
    <property type="resolution" value="3.05 A"/>
    <property type="chains" value="SB=21-234"/>
</dbReference>
<dbReference type="PDB" id="8XP2">
    <property type="method" value="EM"/>
    <property type="resolution" value="3.20 A"/>
    <property type="chains" value="SB=1-264"/>
</dbReference>
<dbReference type="PDB" id="8XP3">
    <property type="method" value="EM"/>
    <property type="resolution" value="3.40 A"/>
    <property type="chains" value="SB=1-264"/>
</dbReference>
<dbReference type="PDB" id="8XSX">
    <property type="method" value="EM"/>
    <property type="resolution" value="2.40 A"/>
    <property type="chains" value="SB=1-264"/>
</dbReference>
<dbReference type="PDB" id="8XSY">
    <property type="method" value="EM"/>
    <property type="resolution" value="3.00 A"/>
    <property type="chains" value="SB=1-264"/>
</dbReference>
<dbReference type="PDB" id="8XSZ">
    <property type="method" value="EM"/>
    <property type="resolution" value="3.20 A"/>
    <property type="chains" value="SB=1-264"/>
</dbReference>
<dbReference type="PDB" id="8XXL">
    <property type="method" value="EM"/>
    <property type="resolution" value="2.90 A"/>
    <property type="chains" value="SB=1-264"/>
</dbReference>
<dbReference type="PDB" id="8XXM">
    <property type="method" value="EM"/>
    <property type="resolution" value="3.20 A"/>
    <property type="chains" value="SB=1-264"/>
</dbReference>
<dbReference type="PDB" id="8XXN">
    <property type="method" value="EM"/>
    <property type="resolution" value="3.60 A"/>
    <property type="chains" value="SB=1-264"/>
</dbReference>
<dbReference type="PDB" id="8Y0W">
    <property type="method" value="EM"/>
    <property type="resolution" value="3.40 A"/>
    <property type="chains" value="SB=1-264"/>
</dbReference>
<dbReference type="PDB" id="8Y0X">
    <property type="method" value="EM"/>
    <property type="resolution" value="3.30 A"/>
    <property type="chains" value="SB=1-264"/>
</dbReference>
<dbReference type="PDB" id="8YOO">
    <property type="method" value="EM"/>
    <property type="resolution" value="2.00 A"/>
    <property type="chains" value="SB=1-264"/>
</dbReference>
<dbReference type="PDB" id="8YOP">
    <property type="method" value="EM"/>
    <property type="resolution" value="2.20 A"/>
    <property type="chains" value="SB=1-264"/>
</dbReference>
<dbReference type="PDB" id="8ZDB">
    <property type="method" value="EM"/>
    <property type="resolution" value="3.60 A"/>
    <property type="chains" value="B=1-264"/>
</dbReference>
<dbReference type="PDB" id="8ZDC">
    <property type="method" value="EM"/>
    <property type="resolution" value="3.80 A"/>
    <property type="chains" value="B=1-264"/>
</dbReference>
<dbReference type="PDB" id="8ZDD">
    <property type="method" value="EM"/>
    <property type="resolution" value="3.70 A"/>
    <property type="chains" value="B=1-264"/>
</dbReference>
<dbReference type="PDB" id="9BKD">
    <property type="method" value="EM"/>
    <property type="resolution" value="2.60 A"/>
    <property type="chains" value="O=1-264"/>
</dbReference>
<dbReference type="PDB" id="9BLN">
    <property type="method" value="EM"/>
    <property type="resolution" value="3.90 A"/>
    <property type="chains" value="O=1-264"/>
</dbReference>
<dbReference type="PDB" id="9C3H">
    <property type="method" value="EM"/>
    <property type="resolution" value="2.00 A"/>
    <property type="chains" value="S1=1-264"/>
</dbReference>
<dbReference type="PDB" id="9G8M">
    <property type="method" value="EM"/>
    <property type="resolution" value="3.30 A"/>
    <property type="chains" value="SB=1-264"/>
</dbReference>
<dbReference type="PDB" id="9G8O">
    <property type="method" value="EM"/>
    <property type="resolution" value="3.40 A"/>
    <property type="chains" value="SB=1-264"/>
</dbReference>
<dbReference type="PDBsum" id="4UG0"/>
<dbReference type="PDBsum" id="4V6X"/>
<dbReference type="PDBsum" id="5A2Q"/>
<dbReference type="PDBsum" id="5AJ0"/>
<dbReference type="PDBsum" id="5FLX"/>
<dbReference type="PDBsum" id="5LKS"/>
<dbReference type="PDBsum" id="5OA3"/>
<dbReference type="PDBsum" id="5T2C"/>
<dbReference type="PDBsum" id="5VYC"/>
<dbReference type="PDBsum" id="6FEC"/>
<dbReference type="PDBsum" id="6G18"/>
<dbReference type="PDBsum" id="6G4S"/>
<dbReference type="PDBsum" id="6G4W"/>
<dbReference type="PDBsum" id="6G51"/>
<dbReference type="PDBsum" id="6G53"/>
<dbReference type="PDBsum" id="6G5H"/>
<dbReference type="PDBsum" id="6G5I"/>
<dbReference type="PDBsum" id="6IP5"/>
<dbReference type="PDBsum" id="6IP6"/>
<dbReference type="PDBsum" id="6IP8"/>
<dbReference type="PDBsum" id="6OLE"/>
<dbReference type="PDBsum" id="6OLF"/>
<dbReference type="PDBsum" id="6OLG"/>
<dbReference type="PDBsum" id="6OLI"/>
<dbReference type="PDBsum" id="6OLZ"/>
<dbReference type="PDBsum" id="6OM0"/>
<dbReference type="PDBsum" id="6OM7"/>
<dbReference type="PDBsum" id="6QZP"/>
<dbReference type="PDBsum" id="6XA1"/>
<dbReference type="PDBsum" id="6Y0G"/>
<dbReference type="PDBsum" id="6Y2L"/>
<dbReference type="PDBsum" id="6Y57"/>
<dbReference type="PDBsum" id="6YBD"/>
<dbReference type="PDBsum" id="6YBW"/>
<dbReference type="PDBsum" id="6Z6L"/>
<dbReference type="PDBsum" id="6Z6M"/>
<dbReference type="PDBsum" id="6Z6N"/>
<dbReference type="PDBsum" id="6ZLW"/>
<dbReference type="PDBsum" id="6ZM7"/>
<dbReference type="PDBsum" id="6ZME"/>
<dbReference type="PDBsum" id="6ZMI"/>
<dbReference type="PDBsum" id="6ZMO"/>
<dbReference type="PDBsum" id="6ZMT"/>
<dbReference type="PDBsum" id="6ZMW"/>
<dbReference type="PDBsum" id="6ZN5"/>
<dbReference type="PDBsum" id="6ZOJ"/>
<dbReference type="PDBsum" id="6ZOK"/>
<dbReference type="PDBsum" id="6ZON"/>
<dbReference type="PDBsum" id="6ZP4"/>
<dbReference type="PDBsum" id="6ZUO"/>
<dbReference type="PDBsum" id="6ZV6"/>
<dbReference type="PDBsum" id="6ZVH"/>
<dbReference type="PDBsum" id="6ZVJ"/>
<dbReference type="PDBsum" id="6ZXD"/>
<dbReference type="PDBsum" id="6ZXE"/>
<dbReference type="PDBsum" id="6ZXF"/>
<dbReference type="PDBsum" id="6ZXG"/>
<dbReference type="PDBsum" id="6ZXH"/>
<dbReference type="PDBsum" id="7A09"/>
<dbReference type="PDBsum" id="7K5I"/>
<dbReference type="PDBsum" id="7MQ8"/>
<dbReference type="PDBsum" id="7MQ9"/>
<dbReference type="PDBsum" id="7MQA"/>
<dbReference type="PDBsum" id="7QP6"/>
<dbReference type="PDBsum" id="7QP7"/>
<dbReference type="PDBsum" id="7QVP"/>
<dbReference type="PDBsum" id="7R4X"/>
<dbReference type="PDBsum" id="7TQL"/>
<dbReference type="PDBsum" id="7WTS"/>
<dbReference type="PDBsum" id="7WTT"/>
<dbReference type="PDBsum" id="7WTU"/>
<dbReference type="PDBsum" id="7WTV"/>
<dbReference type="PDBsum" id="7WTW"/>
<dbReference type="PDBsum" id="7WTX"/>
<dbReference type="PDBsum" id="7WTZ"/>
<dbReference type="PDBsum" id="7WU0"/>
<dbReference type="PDBsum" id="7XNX"/>
<dbReference type="PDBsum" id="7XNY"/>
<dbReference type="PDBsum" id="8G5Y"/>
<dbReference type="PDBsum" id="8G5Z"/>
<dbReference type="PDBsum" id="8G60"/>
<dbReference type="PDBsum" id="8G61"/>
<dbReference type="PDBsum" id="8G6J"/>
<dbReference type="PDBsum" id="8GLP"/>
<dbReference type="PDBsum" id="8IFD"/>
<dbReference type="PDBsum" id="8IFE"/>
<dbReference type="PDBsum" id="8JDJ"/>
<dbReference type="PDBsum" id="8JDK"/>
<dbReference type="PDBsum" id="8JDL"/>
<dbReference type="PDBsum" id="8JDM"/>
<dbReference type="PDBsum" id="8K2C"/>
<dbReference type="PDBsum" id="8OZ0"/>
<dbReference type="PDBsum" id="8PJ1"/>
<dbReference type="PDBsum" id="8PJ2"/>
<dbReference type="PDBsum" id="8PJ3"/>
<dbReference type="PDBsum" id="8PJ4"/>
<dbReference type="PDBsum" id="8PJ5"/>
<dbReference type="PDBsum" id="8PJ6"/>
<dbReference type="PDBsum" id="8PPK"/>
<dbReference type="PDBsum" id="8PPL"/>
<dbReference type="PDBsum" id="8QOI"/>
<dbReference type="PDBsum" id="8RG0"/>
<dbReference type="PDBsum" id="8T4S"/>
<dbReference type="PDBsum" id="8UKB"/>
<dbReference type="PDBsum" id="8XP2"/>
<dbReference type="PDBsum" id="8XP3"/>
<dbReference type="PDBsum" id="8XSX"/>
<dbReference type="PDBsum" id="8XSY"/>
<dbReference type="PDBsum" id="8XSZ"/>
<dbReference type="PDBsum" id="8XXL"/>
<dbReference type="PDBsum" id="8XXM"/>
<dbReference type="PDBsum" id="8XXN"/>
<dbReference type="PDBsum" id="8Y0W"/>
<dbReference type="PDBsum" id="8Y0X"/>
<dbReference type="PDBsum" id="8YOO"/>
<dbReference type="PDBsum" id="8YOP"/>
<dbReference type="PDBsum" id="8ZDB"/>
<dbReference type="PDBsum" id="8ZDC"/>
<dbReference type="PDBsum" id="8ZDD"/>
<dbReference type="PDBsum" id="9BKD"/>
<dbReference type="PDBsum" id="9BLN"/>
<dbReference type="PDBsum" id="9C3H"/>
<dbReference type="PDBsum" id="9G8M"/>
<dbReference type="PDBsum" id="9G8O"/>
<dbReference type="EMDB" id="EMD-10668"/>
<dbReference type="EMDB" id="EMD-10674"/>
<dbReference type="EMDB" id="EMD-10690"/>
<dbReference type="EMDB" id="EMD-10769"/>
<dbReference type="EMDB" id="EMD-10775"/>
<dbReference type="EMDB" id="EMD-11098"/>
<dbReference type="EMDB" id="EMD-11099"/>
<dbReference type="EMDB" id="EMD-11100"/>
<dbReference type="EMDB" id="EMD-11276"/>
<dbReference type="EMDB" id="EMD-11288"/>
<dbReference type="EMDB" id="EMD-11289"/>
<dbReference type="EMDB" id="EMD-11292"/>
<dbReference type="EMDB" id="EMD-11299"/>
<dbReference type="EMDB" id="EMD-11301"/>
<dbReference type="EMDB" id="EMD-11302"/>
<dbReference type="EMDB" id="EMD-11310"/>
<dbReference type="EMDB" id="EMD-11320"/>
<dbReference type="EMDB" id="EMD-11321"/>
<dbReference type="EMDB" id="EMD-11325"/>
<dbReference type="EMDB" id="EMD-11335"/>
<dbReference type="EMDB" id="EMD-11440"/>
<dbReference type="EMDB" id="EMD-11441"/>
<dbReference type="EMDB" id="EMD-11456"/>
<dbReference type="EMDB" id="EMD-11458"/>
<dbReference type="EMDB" id="EMD-11517"/>
<dbReference type="EMDB" id="EMD-11518"/>
<dbReference type="EMDB" id="EMD-11519"/>
<dbReference type="EMDB" id="EMD-11520"/>
<dbReference type="EMDB" id="EMD-11521"/>
<dbReference type="EMDB" id="EMD-11602"/>
<dbReference type="EMDB" id="EMD-14113"/>
<dbReference type="EMDB" id="EMD-14114"/>
<dbReference type="EMDB" id="EMD-14181"/>
<dbReference type="EMDB" id="EMD-14317"/>
<dbReference type="EMDB" id="EMD-17297"/>
<dbReference type="EMDB" id="EMD-17696"/>
<dbReference type="EMDB" id="EMD-17697"/>
<dbReference type="EMDB" id="EMD-17698"/>
<dbReference type="EMDB" id="EMD-17699"/>
<dbReference type="EMDB" id="EMD-17700"/>
<dbReference type="EMDB" id="EMD-17701"/>
<dbReference type="EMDB" id="EMD-17804"/>
<dbReference type="EMDB" id="EMD-17805"/>
<dbReference type="EMDB" id="EMD-18539"/>
<dbReference type="EMDB" id="EMD-19128"/>
<dbReference type="EMDB" id="EMD-22681"/>
<dbReference type="EMDB" id="EMD-23936"/>
<dbReference type="EMDB" id="EMD-23937"/>
<dbReference type="EMDB" id="EMD-23938"/>
<dbReference type="EMDB" id="EMD-29757"/>
<dbReference type="EMDB" id="EMD-29758"/>
<dbReference type="EMDB" id="EMD-29759"/>
<dbReference type="EMDB" id="EMD-29760"/>
<dbReference type="EMDB" id="EMD-29771"/>
<dbReference type="EMDB" id="EMD-32799"/>
<dbReference type="EMDB" id="EMD-32800"/>
<dbReference type="EMDB" id="EMD-32801"/>
<dbReference type="EMDB" id="EMD-32802"/>
<dbReference type="EMDB" id="EMD-32803"/>
<dbReference type="EMDB" id="EMD-32804"/>
<dbReference type="EMDB" id="EMD-32806"/>
<dbReference type="EMDB" id="EMD-32807"/>
<dbReference type="EMDB" id="EMD-33329"/>
<dbReference type="EMDB" id="EMD-33330"/>
<dbReference type="EMDB" id="EMD-35413"/>
<dbReference type="EMDB" id="EMD-35414"/>
<dbReference type="EMDB" id="EMD-36178"/>
<dbReference type="EMDB" id="EMD-36179"/>
<dbReference type="EMDB" id="EMD-36180"/>
<dbReference type="EMDB" id="EMD-36181"/>
<dbReference type="EMDB" id="EMD-36838"/>
<dbReference type="EMDB" id="EMD-3770"/>
<dbReference type="EMDB" id="EMD-38548"/>
<dbReference type="EMDB" id="EMD-38549"/>
<dbReference type="EMDB" id="EMD-38629"/>
<dbReference type="EMDB" id="EMD-38630"/>
<dbReference type="EMDB" id="EMD-38631"/>
<dbReference type="EMDB" id="EMD-38752"/>
<dbReference type="EMDB" id="EMD-38753"/>
<dbReference type="EMDB" id="EMD-38754"/>
<dbReference type="EMDB" id="EMD-3883"/>
<dbReference type="EMDB" id="EMD-39455"/>
<dbReference type="EMDB" id="EMD-39456"/>
<dbReference type="EMDB" id="EMD-39956"/>
<dbReference type="EMDB" id="EMD-39957"/>
<dbReference type="EMDB" id="EMD-39958"/>
<dbReference type="EMDB" id="EMD-40205"/>
<dbReference type="EMDB" id="EMD-4070"/>
<dbReference type="EMDB" id="EMD-41039"/>
<dbReference type="EMDB" id="EMD-42351"/>
<dbReference type="EMDB" id="EMD-4242"/>
<dbReference type="EMDB" id="EMD-4337"/>
<dbReference type="EMDB" id="EMD-4348"/>
<dbReference type="EMDB" id="EMD-4349"/>
<dbReference type="EMDB" id="EMD-4350"/>
<dbReference type="EMDB" id="EMD-4351"/>
<dbReference type="EMDB" id="EMD-4352"/>
<dbReference type="EMDB" id="EMD-4353"/>
<dbReference type="EMDB" id="EMD-44641"/>
<dbReference type="EMDB" id="EMD-44671"/>
<dbReference type="EMDB" id="EMD-45170"/>
<dbReference type="EMDB" id="EMD-51132"/>
<dbReference type="EMDB" id="EMD-51134"/>
<dbReference type="EMDB" id="EMD-9701"/>
<dbReference type="EMDB" id="EMD-9702"/>
<dbReference type="EMDB" id="EMD-9703"/>
<dbReference type="SMR" id="P61247"/>
<dbReference type="BioGRID" id="112103">
    <property type="interactions" value="654"/>
</dbReference>
<dbReference type="ComplexPortal" id="CPX-5223">
    <property type="entry name" value="40S cytosolic small ribosomal subunit"/>
</dbReference>
<dbReference type="CORUM" id="P61247"/>
<dbReference type="DIP" id="DIP-29408N"/>
<dbReference type="FunCoup" id="P61247">
    <property type="interactions" value="2448"/>
</dbReference>
<dbReference type="IntAct" id="P61247">
    <property type="interactions" value="266"/>
</dbReference>
<dbReference type="MINT" id="P61247"/>
<dbReference type="STRING" id="9606.ENSP00000346050"/>
<dbReference type="CarbonylDB" id="P61247"/>
<dbReference type="GlyGen" id="P61247">
    <property type="glycosylation" value="1 site, 1 O-linked glycan (1 site)"/>
</dbReference>
<dbReference type="iPTMnet" id="P61247"/>
<dbReference type="MetOSite" id="P61247"/>
<dbReference type="PhosphoSitePlus" id="P61247"/>
<dbReference type="SwissPalm" id="P61247"/>
<dbReference type="BioMuta" id="RPS3A"/>
<dbReference type="DMDM" id="47117764"/>
<dbReference type="jPOST" id="P61247"/>
<dbReference type="MassIVE" id="P61247"/>
<dbReference type="PaxDb" id="9606-ENSP00000346050"/>
<dbReference type="PeptideAtlas" id="P61247"/>
<dbReference type="PRIDE" id="P61247"/>
<dbReference type="ProteomicsDB" id="57286"/>
<dbReference type="Pumba" id="P61247"/>
<dbReference type="TopDownProteomics" id="P61247"/>
<dbReference type="Antibodypedia" id="27718">
    <property type="antibodies" value="196 antibodies from 30 providers"/>
</dbReference>
<dbReference type="DNASU" id="6189"/>
<dbReference type="Ensembl" id="ENST00000274065.9">
    <property type="protein sequence ID" value="ENSP00000346050.3"/>
    <property type="gene ID" value="ENSG00000145425.10"/>
</dbReference>
<dbReference type="Ensembl" id="ENST00000709893.1">
    <property type="protein sequence ID" value="ENSP00000517921.1"/>
    <property type="gene ID" value="ENSG00000292158.1"/>
</dbReference>
<dbReference type="GeneID" id="6189"/>
<dbReference type="KEGG" id="hsa:6189"/>
<dbReference type="MANE-Select" id="ENST00000274065.9">
    <property type="protein sequence ID" value="ENSP00000346050.3"/>
    <property type="RefSeq nucleotide sequence ID" value="NM_001006.5"/>
    <property type="RefSeq protein sequence ID" value="NP_000997.1"/>
</dbReference>
<dbReference type="UCSC" id="uc003ilz.4">
    <property type="organism name" value="human"/>
</dbReference>
<dbReference type="AGR" id="HGNC:10421"/>
<dbReference type="CTD" id="6189"/>
<dbReference type="DisGeNET" id="6189"/>
<dbReference type="GeneCards" id="RPS3A"/>
<dbReference type="HGNC" id="HGNC:10421">
    <property type="gene designation" value="RPS3A"/>
</dbReference>
<dbReference type="HPA" id="ENSG00000145425">
    <property type="expression patterns" value="Low tissue specificity"/>
</dbReference>
<dbReference type="MIM" id="180478">
    <property type="type" value="gene"/>
</dbReference>
<dbReference type="neXtProt" id="NX_P61247"/>
<dbReference type="OpenTargets" id="ENSG00000145425"/>
<dbReference type="PharmGKB" id="PA34830"/>
<dbReference type="VEuPathDB" id="HostDB:ENSG00000145425"/>
<dbReference type="eggNOG" id="KOG1628">
    <property type="taxonomic scope" value="Eukaryota"/>
</dbReference>
<dbReference type="GeneTree" id="ENSGT00390000018433"/>
<dbReference type="HOGENOM" id="CLU_062507_0_1_1"/>
<dbReference type="InParanoid" id="P61247"/>
<dbReference type="OMA" id="TRFKGHE"/>
<dbReference type="OrthoDB" id="9819960at2759"/>
<dbReference type="PAN-GO" id="P61247">
    <property type="GO annotations" value="1 GO annotation based on evolutionary models"/>
</dbReference>
<dbReference type="PhylomeDB" id="P61247"/>
<dbReference type="TreeFam" id="TF300037"/>
<dbReference type="PathwayCommons" id="P61247"/>
<dbReference type="Reactome" id="R-HSA-156827">
    <property type="pathway name" value="L13a-mediated translational silencing of Ceruloplasmin expression"/>
</dbReference>
<dbReference type="Reactome" id="R-HSA-156902">
    <property type="pathway name" value="Peptide chain elongation"/>
</dbReference>
<dbReference type="Reactome" id="R-HSA-1799339">
    <property type="pathway name" value="SRP-dependent cotranslational protein targeting to membrane"/>
</dbReference>
<dbReference type="Reactome" id="R-HSA-192823">
    <property type="pathway name" value="Viral mRNA Translation"/>
</dbReference>
<dbReference type="Reactome" id="R-HSA-2408557">
    <property type="pathway name" value="Selenocysteine synthesis"/>
</dbReference>
<dbReference type="Reactome" id="R-HSA-6791226">
    <property type="pathway name" value="Major pathway of rRNA processing in the nucleolus and cytosol"/>
</dbReference>
<dbReference type="Reactome" id="R-HSA-72649">
    <property type="pathway name" value="Translation initiation complex formation"/>
</dbReference>
<dbReference type="Reactome" id="R-HSA-72689">
    <property type="pathway name" value="Formation of a pool of free 40S subunits"/>
</dbReference>
<dbReference type="Reactome" id="R-HSA-72695">
    <property type="pathway name" value="Formation of the ternary complex, and subsequently, the 43S complex"/>
</dbReference>
<dbReference type="Reactome" id="R-HSA-72702">
    <property type="pathway name" value="Ribosomal scanning and start codon recognition"/>
</dbReference>
<dbReference type="Reactome" id="R-HSA-72706">
    <property type="pathway name" value="GTP hydrolysis and joining of the 60S ribosomal subunit"/>
</dbReference>
<dbReference type="Reactome" id="R-HSA-72764">
    <property type="pathway name" value="Eukaryotic Translation Termination"/>
</dbReference>
<dbReference type="Reactome" id="R-HSA-9010553">
    <property type="pathway name" value="Regulation of expression of SLITs and ROBOs"/>
</dbReference>
<dbReference type="Reactome" id="R-HSA-9633012">
    <property type="pathway name" value="Response of EIF2AK4 (GCN2) to amino acid deficiency"/>
</dbReference>
<dbReference type="Reactome" id="R-HSA-9735869">
    <property type="pathway name" value="SARS-CoV-1 modulates host translation machinery"/>
</dbReference>
<dbReference type="Reactome" id="R-HSA-9754678">
    <property type="pathway name" value="SARS-CoV-2 modulates host translation machinery"/>
</dbReference>
<dbReference type="Reactome" id="R-HSA-975956">
    <property type="pathway name" value="Nonsense Mediated Decay (NMD) independent of the Exon Junction Complex (EJC)"/>
</dbReference>
<dbReference type="Reactome" id="R-HSA-975957">
    <property type="pathway name" value="Nonsense Mediated Decay (NMD) enhanced by the Exon Junction Complex (EJC)"/>
</dbReference>
<dbReference type="SignaLink" id="P61247"/>
<dbReference type="SIGNOR" id="P61247"/>
<dbReference type="BioGRID-ORCS" id="6189">
    <property type="hits" value="462 hits in 737 CRISPR screens"/>
</dbReference>
<dbReference type="CD-CODE" id="232F8A39">
    <property type="entry name" value="P-body"/>
</dbReference>
<dbReference type="CD-CODE" id="91857CE7">
    <property type="entry name" value="Nucleolus"/>
</dbReference>
<dbReference type="CD-CODE" id="F85A2E29">
    <property type="entry name" value="IMP1 RNP granule"/>
</dbReference>
<dbReference type="ChiTaRS" id="RPS3A">
    <property type="organism name" value="human"/>
</dbReference>
<dbReference type="GeneWiki" id="RPS3A"/>
<dbReference type="GenomeRNAi" id="6189"/>
<dbReference type="Pharos" id="P61247">
    <property type="development level" value="Tbio"/>
</dbReference>
<dbReference type="PRO" id="PR:P61247"/>
<dbReference type="Proteomes" id="UP000005640">
    <property type="component" value="Chromosome 4"/>
</dbReference>
<dbReference type="RNAct" id="P61247">
    <property type="molecule type" value="protein"/>
</dbReference>
<dbReference type="Bgee" id="ENSG00000145425">
    <property type="expression patterns" value="Expressed in cortical plate and 99 other cell types or tissues"/>
</dbReference>
<dbReference type="ExpressionAtlas" id="P61247">
    <property type="expression patterns" value="baseline and differential"/>
</dbReference>
<dbReference type="GO" id="GO:0005737">
    <property type="term" value="C:cytoplasm"/>
    <property type="evidence" value="ECO:0000314"/>
    <property type="project" value="UniProtKB"/>
</dbReference>
<dbReference type="GO" id="GO:0005829">
    <property type="term" value="C:cytosol"/>
    <property type="evidence" value="ECO:0000314"/>
    <property type="project" value="HPA"/>
</dbReference>
<dbReference type="GO" id="GO:0022626">
    <property type="term" value="C:cytosolic ribosome"/>
    <property type="evidence" value="ECO:0000314"/>
    <property type="project" value="FlyBase"/>
</dbReference>
<dbReference type="GO" id="GO:0022627">
    <property type="term" value="C:cytosolic small ribosomal subunit"/>
    <property type="evidence" value="ECO:0000314"/>
    <property type="project" value="UniProtKB"/>
</dbReference>
<dbReference type="GO" id="GO:0005783">
    <property type="term" value="C:endoplasmic reticulum"/>
    <property type="evidence" value="ECO:0000314"/>
    <property type="project" value="HPA"/>
</dbReference>
<dbReference type="GO" id="GO:0070062">
    <property type="term" value="C:extracellular exosome"/>
    <property type="evidence" value="ECO:0007005"/>
    <property type="project" value="UniProtKB"/>
</dbReference>
<dbReference type="GO" id="GO:0005925">
    <property type="term" value="C:focal adhesion"/>
    <property type="evidence" value="ECO:0007005"/>
    <property type="project" value="UniProtKB"/>
</dbReference>
<dbReference type="GO" id="GO:0005730">
    <property type="term" value="C:nucleolus"/>
    <property type="evidence" value="ECO:0000314"/>
    <property type="project" value="UniProtKB"/>
</dbReference>
<dbReference type="GO" id="GO:0005654">
    <property type="term" value="C:nucleoplasm"/>
    <property type="evidence" value="ECO:0000304"/>
    <property type="project" value="Reactome"/>
</dbReference>
<dbReference type="GO" id="GO:0005634">
    <property type="term" value="C:nucleus"/>
    <property type="evidence" value="ECO:0007005"/>
    <property type="project" value="UniProtKB"/>
</dbReference>
<dbReference type="GO" id="GO:1990904">
    <property type="term" value="C:ribonucleoprotein complex"/>
    <property type="evidence" value="ECO:0000314"/>
    <property type="project" value="UniProtKB"/>
</dbReference>
<dbReference type="GO" id="GO:0032040">
    <property type="term" value="C:small-subunit processome"/>
    <property type="evidence" value="ECO:0000314"/>
    <property type="project" value="UniProtKB"/>
</dbReference>
<dbReference type="GO" id="GO:0045202">
    <property type="term" value="C:synapse"/>
    <property type="evidence" value="ECO:0007669"/>
    <property type="project" value="Ensembl"/>
</dbReference>
<dbReference type="GO" id="GO:0048027">
    <property type="term" value="F:mRNA 5'-UTR binding"/>
    <property type="evidence" value="ECO:0000314"/>
    <property type="project" value="CAFA"/>
</dbReference>
<dbReference type="GO" id="GO:0003723">
    <property type="term" value="F:RNA binding"/>
    <property type="evidence" value="ECO:0007005"/>
    <property type="project" value="UniProtKB"/>
</dbReference>
<dbReference type="GO" id="GO:0003735">
    <property type="term" value="F:structural constituent of ribosome"/>
    <property type="evidence" value="ECO:0000314"/>
    <property type="project" value="FlyBase"/>
</dbReference>
<dbReference type="GO" id="GO:0030154">
    <property type="term" value="P:cell differentiation"/>
    <property type="evidence" value="ECO:0007669"/>
    <property type="project" value="UniProtKB-KW"/>
</dbReference>
<dbReference type="GO" id="GO:0002181">
    <property type="term" value="P:cytoplasmic translation"/>
    <property type="evidence" value="ECO:0000303"/>
    <property type="project" value="ComplexPortal"/>
</dbReference>
<dbReference type="GO" id="GO:0043066">
    <property type="term" value="P:negative regulation of apoptotic process"/>
    <property type="evidence" value="ECO:0000315"/>
    <property type="project" value="UniProtKB"/>
</dbReference>
<dbReference type="GO" id="GO:0042274">
    <property type="term" value="P:ribosomal small subunit biogenesis"/>
    <property type="evidence" value="ECO:0000314"/>
    <property type="project" value="UniProtKB"/>
</dbReference>
<dbReference type="GO" id="GO:0006412">
    <property type="term" value="P:translation"/>
    <property type="evidence" value="ECO:0000315"/>
    <property type="project" value="UniProtKB"/>
</dbReference>
<dbReference type="GO" id="GO:0006413">
    <property type="term" value="P:translational initiation"/>
    <property type="evidence" value="ECO:0000304"/>
    <property type="project" value="UniProtKB"/>
</dbReference>
<dbReference type="HAMAP" id="MF_03122">
    <property type="entry name" value="Ribosomal_eS1_euk"/>
    <property type="match status" value="1"/>
</dbReference>
<dbReference type="InterPro" id="IPR001593">
    <property type="entry name" value="Ribosomal_eS1"/>
</dbReference>
<dbReference type="InterPro" id="IPR018281">
    <property type="entry name" value="Ribosomal_eS1_CS"/>
</dbReference>
<dbReference type="InterPro" id="IPR027500">
    <property type="entry name" value="Ribosomal_eS1_euk"/>
</dbReference>
<dbReference type="PANTHER" id="PTHR11830">
    <property type="entry name" value="40S RIBOSOMAL PROTEIN S3A"/>
    <property type="match status" value="1"/>
</dbReference>
<dbReference type="Pfam" id="PF01015">
    <property type="entry name" value="Ribosomal_S3Ae"/>
    <property type="match status" value="1"/>
</dbReference>
<dbReference type="SMART" id="SM01397">
    <property type="entry name" value="Ribosomal_S3Ae"/>
    <property type="match status" value="1"/>
</dbReference>
<dbReference type="PROSITE" id="PS01191">
    <property type="entry name" value="RIBOSOMAL_S3AE"/>
    <property type="match status" value="1"/>
</dbReference>
<proteinExistence type="evidence at protein level"/>
<sequence length="264" mass="29945">MAVGKNKRLTKGGKKGAKKKVVDPFSKKDWYDVKAPAMFNIRNIGKTLVTRTQGTKIASDGLKGRVFEVSLADLQNDEVAFRKFKLITEDVQGKNCLTNFHGMDLTRDKMCSMVKKWQTMIEAHVDVKTTDGYLLRLFCVGFTKKRNNQIRKTSYAQHQQVRQIRKKMMEIMTREVQTNDLKEVVNKLIPDSIGKDIEKACQSIYPLHDVFVRKVKMLKKPKFELGKLMELHGEGSSSGKATGDETGAKVERADGYEPPVQESV</sequence>
<organism>
    <name type="scientific">Homo sapiens</name>
    <name type="common">Human</name>
    <dbReference type="NCBI Taxonomy" id="9606"/>
    <lineage>
        <taxon>Eukaryota</taxon>
        <taxon>Metazoa</taxon>
        <taxon>Chordata</taxon>
        <taxon>Craniata</taxon>
        <taxon>Vertebrata</taxon>
        <taxon>Euteleostomi</taxon>
        <taxon>Mammalia</taxon>
        <taxon>Eutheria</taxon>
        <taxon>Euarchontoglires</taxon>
        <taxon>Primates</taxon>
        <taxon>Haplorrhini</taxon>
        <taxon>Catarrhini</taxon>
        <taxon>Hominidae</taxon>
        <taxon>Homo</taxon>
    </lineage>
</organism>
<name>RS3A_HUMAN</name>
<keyword id="KW-0002">3D-structure</keyword>
<keyword id="KW-0007">Acetylation</keyword>
<keyword id="KW-0013">ADP-ribosylation</keyword>
<keyword id="KW-0963">Cytoplasm</keyword>
<keyword id="KW-0221">Differentiation</keyword>
<keyword id="KW-0903">Direct protein sequencing</keyword>
<keyword id="KW-1017">Isopeptide bond</keyword>
<keyword id="KW-0539">Nucleus</keyword>
<keyword id="KW-0597">Phosphoprotein</keyword>
<keyword id="KW-1267">Proteomics identification</keyword>
<keyword id="KW-1185">Reference proteome</keyword>
<keyword id="KW-0687">Ribonucleoprotein</keyword>
<keyword id="KW-0689">Ribosomal protein</keyword>
<keyword id="KW-0832">Ubl conjugation</keyword>
<gene>
    <name evidence="2" type="primary">RPS3A</name>
    <name type="synonym">FTE1</name>
    <name type="synonym">MFTL</name>
</gene>
<protein>
    <recommendedName>
        <fullName evidence="2 10">Small ribosomal subunit protein eS1</fullName>
    </recommendedName>
    <alternativeName>
        <fullName>40S ribosomal protein S3a</fullName>
    </alternativeName>
    <alternativeName>
        <fullName>v-fos transformation effector protein</fullName>
        <shortName>Fte-1</shortName>
    </alternativeName>
</protein>